<name>RN213_MOUSE</name>
<organism>
    <name type="scientific">Mus musculus</name>
    <name type="common">Mouse</name>
    <dbReference type="NCBI Taxonomy" id="10090"/>
    <lineage>
        <taxon>Eukaryota</taxon>
        <taxon>Metazoa</taxon>
        <taxon>Chordata</taxon>
        <taxon>Craniata</taxon>
        <taxon>Vertebrata</taxon>
        <taxon>Euteleostomi</taxon>
        <taxon>Mammalia</taxon>
        <taxon>Eutheria</taxon>
        <taxon>Euarchontoglires</taxon>
        <taxon>Glires</taxon>
        <taxon>Rodentia</taxon>
        <taxon>Myomorpha</taxon>
        <taxon>Muroidea</taxon>
        <taxon>Muridae</taxon>
        <taxon>Murinae</taxon>
        <taxon>Mus</taxon>
        <taxon>Mus</taxon>
    </lineage>
</organism>
<evidence type="ECO:0000250" key="1">
    <source>
        <dbReference type="UniProtKB" id="Q63HN8"/>
    </source>
</evidence>
<evidence type="ECO:0000255" key="2"/>
<evidence type="ECO:0000255" key="3">
    <source>
        <dbReference type="PROSITE-ProRule" id="PRU00175"/>
    </source>
</evidence>
<evidence type="ECO:0000255" key="4">
    <source>
        <dbReference type="PROSITE-ProRule" id="PRU01325"/>
    </source>
</evidence>
<evidence type="ECO:0000256" key="5">
    <source>
        <dbReference type="SAM" id="MobiDB-lite"/>
    </source>
</evidence>
<evidence type="ECO:0000269" key="6">
    <source>
    </source>
</evidence>
<evidence type="ECO:0000269" key="7">
    <source>
    </source>
</evidence>
<evidence type="ECO:0000269" key="8">
    <source>
    </source>
</evidence>
<evidence type="ECO:0000269" key="9">
    <source>
    </source>
</evidence>
<evidence type="ECO:0000269" key="10">
    <source>
    </source>
</evidence>
<evidence type="ECO:0000269" key="11">
    <source>
    </source>
</evidence>
<evidence type="ECO:0000269" key="12">
    <source>
    </source>
</evidence>
<evidence type="ECO:0000269" key="13">
    <source>
    </source>
</evidence>
<evidence type="ECO:0000303" key="14">
    <source>
    </source>
</evidence>
<evidence type="ECO:0000305" key="15"/>
<evidence type="ECO:0000312" key="16">
    <source>
        <dbReference type="MGI" id="MGI:1289196"/>
    </source>
</evidence>
<evidence type="ECO:0007744" key="17">
    <source>
        <dbReference type="PDB" id="6TAX"/>
    </source>
</evidence>
<evidence type="ECO:0007744" key="18">
    <source>
        <dbReference type="PDB" id="6TAY"/>
    </source>
</evidence>
<evidence type="ECO:0007829" key="19">
    <source>
        <dbReference type="PDB" id="6TAX"/>
    </source>
</evidence>
<evidence type="ECO:0007829" key="20">
    <source>
        <dbReference type="PDB" id="6TAY"/>
    </source>
</evidence>
<evidence type="ECO:0007829" key="21">
    <source>
        <dbReference type="PDB" id="7OIK"/>
    </source>
</evidence>
<feature type="chain" id="PRO_0000415918" description="E3 ubiquitin-protein ligase RNF213">
    <location>
        <begin position="1"/>
        <end position="5148"/>
    </location>
</feature>
<feature type="zinc finger region" description="RING-type" evidence="3">
    <location>
        <begin position="3947"/>
        <end position="3986"/>
    </location>
</feature>
<feature type="zinc finger region" description="RZ-type" evidence="4">
    <location>
        <begin position="4429"/>
        <end position="4501"/>
    </location>
</feature>
<feature type="region of interest" description="Disordered" evidence="5">
    <location>
        <begin position="38"/>
        <end position="341"/>
    </location>
</feature>
<feature type="coiled-coil region" evidence="2">
    <location>
        <begin position="3435"/>
        <end position="3465"/>
    </location>
</feature>
<feature type="compositionally biased region" description="Polar residues" evidence="5">
    <location>
        <begin position="38"/>
        <end position="48"/>
    </location>
</feature>
<feature type="compositionally biased region" description="Basic and acidic residues" evidence="5">
    <location>
        <begin position="69"/>
        <end position="78"/>
    </location>
</feature>
<feature type="compositionally biased region" description="Polar residues" evidence="5">
    <location>
        <begin position="101"/>
        <end position="113"/>
    </location>
</feature>
<feature type="compositionally biased region" description="Low complexity" evidence="5">
    <location>
        <begin position="130"/>
        <end position="146"/>
    </location>
</feature>
<feature type="compositionally biased region" description="Basic and acidic residues" evidence="5">
    <location>
        <begin position="233"/>
        <end position="245"/>
    </location>
</feature>
<feature type="compositionally biased region" description="Basic and acidic residues" evidence="5">
    <location>
        <begin position="257"/>
        <end position="267"/>
    </location>
</feature>
<feature type="compositionally biased region" description="Basic and acidic residues" evidence="5">
    <location>
        <begin position="279"/>
        <end position="289"/>
    </location>
</feature>
<feature type="compositionally biased region" description="Low complexity" evidence="5">
    <location>
        <begin position="319"/>
        <end position="335"/>
    </location>
</feature>
<feature type="active site" description="Nucleophile; for E3 ubiquitin-lipopolysaccharide ligase activity" evidence="4">
    <location>
        <position position="4462"/>
    </location>
</feature>
<feature type="binding site" evidence="11 17 18">
    <location>
        <begin position="1957"/>
        <end position="1962"/>
    </location>
    <ligand>
        <name>ATP</name>
        <dbReference type="ChEBI" id="CHEBI:30616"/>
    </ligand>
</feature>
<feature type="binding site" evidence="11 17 18">
    <location>
        <position position="2060"/>
    </location>
    <ligand>
        <name>ATP</name>
        <dbReference type="ChEBI" id="CHEBI:30616"/>
    </ligand>
</feature>
<feature type="binding site" evidence="11 18">
    <location>
        <position position="2114"/>
    </location>
    <ligand>
        <name>ATP</name>
        <dbReference type="ChEBI" id="CHEBI:30616"/>
    </ligand>
</feature>
<feature type="binding site" evidence="11 17 18">
    <location>
        <position position="2116"/>
    </location>
    <ligand>
        <name>ATP</name>
        <dbReference type="ChEBI" id="CHEBI:30616"/>
    </ligand>
</feature>
<feature type="binding site" evidence="11 17">
    <location>
        <position position="2177"/>
    </location>
    <ligand>
        <name>ATP</name>
        <dbReference type="ChEBI" id="CHEBI:30616"/>
    </ligand>
</feature>
<feature type="binding site" evidence="11 18">
    <location>
        <position position="2460"/>
    </location>
    <ligand>
        <name>ATP</name>
        <dbReference type="ChEBI" id="CHEBI:30616"/>
    </ligand>
</feature>
<feature type="binding site" evidence="11 17">
    <location>
        <position position="2535"/>
    </location>
    <ligand>
        <name>ATP</name>
        <dbReference type="ChEBI" id="CHEBI:30616"/>
    </ligand>
</feature>
<feature type="binding site" evidence="11 17 18">
    <location>
        <position position="3947"/>
    </location>
    <ligand>
        <name>Zn(2+)</name>
        <dbReference type="ChEBI" id="CHEBI:29105"/>
        <label>1</label>
    </ligand>
</feature>
<feature type="binding site" evidence="11 17 18">
    <location>
        <position position="3950"/>
    </location>
    <ligand>
        <name>Zn(2+)</name>
        <dbReference type="ChEBI" id="CHEBI:29105"/>
        <label>1</label>
    </ligand>
</feature>
<feature type="binding site" evidence="11 17 18">
    <location>
        <position position="3962"/>
    </location>
    <ligand>
        <name>Zn(2+)</name>
        <dbReference type="ChEBI" id="CHEBI:29105"/>
        <label>2</label>
    </ligand>
</feature>
<feature type="binding site" evidence="11 17 18">
    <location>
        <position position="3964"/>
    </location>
    <ligand>
        <name>Zn(2+)</name>
        <dbReference type="ChEBI" id="CHEBI:29105"/>
        <label>2</label>
    </ligand>
</feature>
<feature type="binding site" evidence="11 17 18">
    <location>
        <position position="3967"/>
    </location>
    <ligand>
        <name>Zn(2+)</name>
        <dbReference type="ChEBI" id="CHEBI:29105"/>
        <label>1</label>
    </ligand>
</feature>
<feature type="binding site" evidence="11 17 18">
    <location>
        <position position="3970"/>
    </location>
    <ligand>
        <name>Zn(2+)</name>
        <dbReference type="ChEBI" id="CHEBI:29105"/>
        <label>1</label>
    </ligand>
</feature>
<feature type="binding site" evidence="11 17 18">
    <location>
        <position position="3982"/>
    </location>
    <ligand>
        <name>Zn(2+)</name>
        <dbReference type="ChEBI" id="CHEBI:29105"/>
        <label>2</label>
    </ligand>
</feature>
<feature type="binding site" evidence="11 17 18">
    <location>
        <position position="3985"/>
    </location>
    <ligand>
        <name>Zn(2+)</name>
        <dbReference type="ChEBI" id="CHEBI:29105"/>
        <label>2</label>
    </ligand>
</feature>
<feature type="binding site" evidence="4">
    <location>
        <position position="4451"/>
    </location>
    <ligand>
        <name>Zn(2+)</name>
        <dbReference type="ChEBI" id="CHEBI:29105"/>
        <label>3</label>
    </ligand>
</feature>
<feature type="binding site" evidence="4">
    <location>
        <position position="4455"/>
    </location>
    <ligand>
        <name>Zn(2+)</name>
        <dbReference type="ChEBI" id="CHEBI:29105"/>
        <label>3</label>
    </ligand>
</feature>
<feature type="binding site" evidence="4">
    <location>
        <position position="4471"/>
    </location>
    <ligand>
        <name>Zn(2+)</name>
        <dbReference type="ChEBI" id="CHEBI:29105"/>
        <label>3</label>
    </ligand>
</feature>
<feature type="binding site" evidence="4">
    <location>
        <position position="4474"/>
    </location>
    <ligand>
        <name>Zn(2+)</name>
        <dbReference type="ChEBI" id="CHEBI:29105"/>
        <label>3</label>
    </ligand>
</feature>
<feature type="modified residue" description="Phosphoserine" evidence="1">
    <location>
        <position position="196"/>
    </location>
</feature>
<feature type="modified residue" description="Phosphoserine" evidence="1">
    <location>
        <position position="2234"/>
    </location>
</feature>
<feature type="cross-link" description="Glycyl lysine isopeptide (Lys-Gly) (interchain with G-Cter in SUMO2)" evidence="1">
    <location>
        <position position="1128"/>
    </location>
</feature>
<feature type="mutagenesis site" description="Knockin mice grow normally and do not show any visible phenotype. Slightly impaired angiogenesis. Does not affect ATPase or E3 ubiquitin ligase activities." evidence="9 10 11">
    <original>R</original>
    <variation>K</variation>
    <location>
        <position position="4753"/>
    </location>
</feature>
<feature type="helix" evidence="21">
    <location>
        <begin position="493"/>
        <end position="512"/>
    </location>
</feature>
<feature type="helix" evidence="21">
    <location>
        <begin position="518"/>
        <end position="534"/>
    </location>
</feature>
<feature type="helix" evidence="21">
    <location>
        <begin position="556"/>
        <end position="575"/>
    </location>
</feature>
<feature type="helix" evidence="19">
    <location>
        <begin position="593"/>
        <end position="601"/>
    </location>
</feature>
<feature type="helix" evidence="19">
    <location>
        <begin position="602"/>
        <end position="604"/>
    </location>
</feature>
<feature type="helix" evidence="19">
    <location>
        <begin position="609"/>
        <end position="613"/>
    </location>
</feature>
<feature type="helix" evidence="19">
    <location>
        <begin position="614"/>
        <end position="617"/>
    </location>
</feature>
<feature type="turn" evidence="19">
    <location>
        <begin position="618"/>
        <end position="621"/>
    </location>
</feature>
<feature type="helix" evidence="19">
    <location>
        <begin position="629"/>
        <end position="635"/>
    </location>
</feature>
<feature type="helix" evidence="19">
    <location>
        <begin position="636"/>
        <end position="639"/>
    </location>
</feature>
<feature type="helix" evidence="19">
    <location>
        <begin position="644"/>
        <end position="655"/>
    </location>
</feature>
<feature type="turn" evidence="19">
    <location>
        <begin position="656"/>
        <end position="660"/>
    </location>
</feature>
<feature type="helix" evidence="19">
    <location>
        <begin position="663"/>
        <end position="666"/>
    </location>
</feature>
<feature type="helix" evidence="19">
    <location>
        <begin position="668"/>
        <end position="671"/>
    </location>
</feature>
<feature type="strand" evidence="19">
    <location>
        <begin position="673"/>
        <end position="675"/>
    </location>
</feature>
<feature type="turn" evidence="19">
    <location>
        <begin position="683"/>
        <end position="685"/>
    </location>
</feature>
<feature type="helix" evidence="19">
    <location>
        <begin position="689"/>
        <end position="693"/>
    </location>
</feature>
<feature type="helix" evidence="19">
    <location>
        <begin position="700"/>
        <end position="702"/>
    </location>
</feature>
<feature type="strand" evidence="19">
    <location>
        <begin position="704"/>
        <end position="706"/>
    </location>
</feature>
<feature type="helix" evidence="19">
    <location>
        <begin position="712"/>
        <end position="719"/>
    </location>
</feature>
<feature type="helix" evidence="19">
    <location>
        <begin position="721"/>
        <end position="725"/>
    </location>
</feature>
<feature type="helix" evidence="19">
    <location>
        <begin position="729"/>
        <end position="735"/>
    </location>
</feature>
<feature type="helix" evidence="20">
    <location>
        <begin position="740"/>
        <end position="742"/>
    </location>
</feature>
<feature type="helix" evidence="19">
    <location>
        <begin position="743"/>
        <end position="748"/>
    </location>
</feature>
<feature type="helix" evidence="19">
    <location>
        <begin position="751"/>
        <end position="756"/>
    </location>
</feature>
<feature type="helix" evidence="19">
    <location>
        <begin position="760"/>
        <end position="771"/>
    </location>
</feature>
<feature type="turn" evidence="19">
    <location>
        <begin position="772"/>
        <end position="774"/>
    </location>
</feature>
<feature type="helix" evidence="19">
    <location>
        <begin position="781"/>
        <end position="800"/>
    </location>
</feature>
<feature type="turn" evidence="19">
    <location>
        <begin position="803"/>
        <end position="810"/>
    </location>
</feature>
<feature type="helix" evidence="19">
    <location>
        <begin position="811"/>
        <end position="826"/>
    </location>
</feature>
<feature type="strand" evidence="19">
    <location>
        <begin position="831"/>
        <end position="833"/>
    </location>
</feature>
<feature type="helix" evidence="19">
    <location>
        <begin position="836"/>
        <end position="849"/>
    </location>
</feature>
<feature type="helix" evidence="19">
    <location>
        <begin position="865"/>
        <end position="888"/>
    </location>
</feature>
<feature type="strand" evidence="20">
    <location>
        <begin position="893"/>
        <end position="895"/>
    </location>
</feature>
<feature type="strand" evidence="19">
    <location>
        <begin position="897"/>
        <end position="900"/>
    </location>
</feature>
<feature type="strand" evidence="19">
    <location>
        <begin position="904"/>
        <end position="908"/>
    </location>
</feature>
<feature type="helix" evidence="19">
    <location>
        <begin position="909"/>
        <end position="917"/>
    </location>
</feature>
<feature type="strand" evidence="20">
    <location>
        <begin position="924"/>
        <end position="927"/>
    </location>
</feature>
<feature type="helix" evidence="19">
    <location>
        <begin position="930"/>
        <end position="938"/>
    </location>
</feature>
<feature type="helix" evidence="19">
    <location>
        <begin position="943"/>
        <end position="950"/>
    </location>
</feature>
<feature type="strand" evidence="19">
    <location>
        <begin position="952"/>
        <end position="955"/>
    </location>
</feature>
<feature type="helix" evidence="19">
    <location>
        <begin position="963"/>
        <end position="981"/>
    </location>
</feature>
<feature type="helix" evidence="19">
    <location>
        <begin position="995"/>
        <end position="1009"/>
    </location>
</feature>
<feature type="strand" evidence="19">
    <location>
        <begin position="1013"/>
        <end position="1015"/>
    </location>
</feature>
<feature type="helix" evidence="19">
    <location>
        <begin position="1022"/>
        <end position="1030"/>
    </location>
</feature>
<feature type="helix" evidence="19">
    <location>
        <begin position="1033"/>
        <end position="1043"/>
    </location>
</feature>
<feature type="helix" evidence="19">
    <location>
        <begin position="1045"/>
        <end position="1048"/>
    </location>
</feature>
<feature type="strand" evidence="19">
    <location>
        <begin position="1049"/>
        <end position="1051"/>
    </location>
</feature>
<feature type="helix" evidence="19">
    <location>
        <begin position="1054"/>
        <end position="1071"/>
    </location>
</feature>
<feature type="strand" evidence="19">
    <location>
        <begin position="1072"/>
        <end position="1076"/>
    </location>
</feature>
<feature type="helix" evidence="19">
    <location>
        <begin position="1080"/>
        <end position="1088"/>
    </location>
</feature>
<feature type="helix" evidence="19">
    <location>
        <begin position="1090"/>
        <end position="1101"/>
    </location>
</feature>
<feature type="helix" evidence="19">
    <location>
        <begin position="1114"/>
        <end position="1142"/>
    </location>
</feature>
<feature type="turn" evidence="19">
    <location>
        <begin position="1143"/>
        <end position="1147"/>
    </location>
</feature>
<feature type="strand" evidence="19">
    <location>
        <begin position="1149"/>
        <end position="1151"/>
    </location>
</feature>
<feature type="helix" evidence="19">
    <location>
        <begin position="1155"/>
        <end position="1158"/>
    </location>
</feature>
<feature type="helix" evidence="19">
    <location>
        <begin position="1167"/>
        <end position="1170"/>
    </location>
</feature>
<feature type="helix" evidence="19">
    <location>
        <begin position="1191"/>
        <end position="1202"/>
    </location>
</feature>
<feature type="helix" evidence="19">
    <location>
        <begin position="1207"/>
        <end position="1217"/>
    </location>
</feature>
<feature type="strand" evidence="19">
    <location>
        <begin position="1231"/>
        <end position="1233"/>
    </location>
</feature>
<feature type="helix" evidence="19">
    <location>
        <begin position="1234"/>
        <end position="1240"/>
    </location>
</feature>
<feature type="helix" evidence="19">
    <location>
        <begin position="1242"/>
        <end position="1256"/>
    </location>
</feature>
<feature type="turn" evidence="19">
    <location>
        <begin position="1257"/>
        <end position="1259"/>
    </location>
</feature>
<feature type="helix" evidence="19">
    <location>
        <begin position="1263"/>
        <end position="1269"/>
    </location>
</feature>
<feature type="helix" evidence="19">
    <location>
        <begin position="1271"/>
        <end position="1273"/>
    </location>
</feature>
<feature type="helix" evidence="19">
    <location>
        <begin position="1277"/>
        <end position="1288"/>
    </location>
</feature>
<feature type="turn" evidence="19">
    <location>
        <begin position="1289"/>
        <end position="1292"/>
    </location>
</feature>
<feature type="strand" evidence="19">
    <location>
        <begin position="1296"/>
        <end position="1298"/>
    </location>
</feature>
<feature type="helix" evidence="19">
    <location>
        <begin position="1299"/>
        <end position="1328"/>
    </location>
</feature>
<feature type="helix" evidence="19">
    <location>
        <begin position="1339"/>
        <end position="1345"/>
    </location>
</feature>
<feature type="helix" evidence="19">
    <location>
        <begin position="1362"/>
        <end position="1367"/>
    </location>
</feature>
<feature type="turn" evidence="19">
    <location>
        <begin position="1368"/>
        <end position="1370"/>
    </location>
</feature>
<feature type="strand" evidence="19">
    <location>
        <begin position="1375"/>
        <end position="1377"/>
    </location>
</feature>
<feature type="helix" evidence="19">
    <location>
        <begin position="1378"/>
        <end position="1386"/>
    </location>
</feature>
<feature type="helix" evidence="19">
    <location>
        <begin position="1389"/>
        <end position="1397"/>
    </location>
</feature>
<feature type="helix" evidence="19">
    <location>
        <begin position="1401"/>
        <end position="1403"/>
    </location>
</feature>
<feature type="helix" evidence="19">
    <location>
        <begin position="1404"/>
        <end position="1414"/>
    </location>
</feature>
<feature type="helix" evidence="19">
    <location>
        <begin position="1419"/>
        <end position="1439"/>
    </location>
</feature>
<feature type="helix" evidence="19">
    <location>
        <begin position="1448"/>
        <end position="1463"/>
    </location>
</feature>
<feature type="helix" evidence="19">
    <location>
        <begin position="1468"/>
        <end position="1476"/>
    </location>
</feature>
<feature type="helix" evidence="19">
    <location>
        <begin position="1479"/>
        <end position="1486"/>
    </location>
</feature>
<feature type="helix" evidence="19">
    <location>
        <begin position="1498"/>
        <end position="1506"/>
    </location>
</feature>
<feature type="strand" evidence="19">
    <location>
        <begin position="1508"/>
        <end position="1511"/>
    </location>
</feature>
<feature type="strand" evidence="19">
    <location>
        <begin position="1516"/>
        <end position="1518"/>
    </location>
</feature>
<feature type="helix" evidence="19">
    <location>
        <begin position="1522"/>
        <end position="1525"/>
    </location>
</feature>
<feature type="strand" evidence="19">
    <location>
        <begin position="1526"/>
        <end position="1530"/>
    </location>
</feature>
<feature type="strand" evidence="19">
    <location>
        <begin position="1541"/>
        <end position="1544"/>
    </location>
</feature>
<feature type="helix" evidence="19">
    <location>
        <begin position="1545"/>
        <end position="1556"/>
    </location>
</feature>
<feature type="helix" evidence="19">
    <location>
        <begin position="1564"/>
        <end position="1593"/>
    </location>
</feature>
<feature type="strand" evidence="19">
    <location>
        <begin position="1596"/>
        <end position="1600"/>
    </location>
</feature>
<feature type="strand" evidence="19">
    <location>
        <begin position="1602"/>
        <end position="1606"/>
    </location>
</feature>
<feature type="strand" evidence="19">
    <location>
        <begin position="1612"/>
        <end position="1616"/>
    </location>
</feature>
<feature type="strand" evidence="19">
    <location>
        <begin position="1620"/>
        <end position="1622"/>
    </location>
</feature>
<feature type="strand" evidence="19">
    <location>
        <begin position="1625"/>
        <end position="1627"/>
    </location>
</feature>
<feature type="helix" evidence="19">
    <location>
        <begin position="1631"/>
        <end position="1659"/>
    </location>
</feature>
<feature type="helix" evidence="19">
    <location>
        <begin position="1662"/>
        <end position="1665"/>
    </location>
</feature>
<feature type="helix" evidence="19">
    <location>
        <begin position="1668"/>
        <end position="1678"/>
    </location>
</feature>
<feature type="strand" evidence="19">
    <location>
        <begin position="1680"/>
        <end position="1682"/>
    </location>
</feature>
<feature type="helix" evidence="19">
    <location>
        <begin position="1687"/>
        <end position="1690"/>
    </location>
</feature>
<feature type="turn" evidence="19">
    <location>
        <begin position="1691"/>
        <end position="1695"/>
    </location>
</feature>
<feature type="helix" evidence="19">
    <location>
        <begin position="1700"/>
        <end position="1708"/>
    </location>
</feature>
<feature type="helix" evidence="19">
    <location>
        <begin position="1714"/>
        <end position="1725"/>
    </location>
</feature>
<feature type="helix" evidence="19">
    <location>
        <begin position="1727"/>
        <end position="1730"/>
    </location>
</feature>
<feature type="helix" evidence="19">
    <location>
        <begin position="1736"/>
        <end position="1749"/>
    </location>
</feature>
<feature type="helix" evidence="19">
    <location>
        <begin position="1751"/>
        <end position="1753"/>
    </location>
</feature>
<feature type="helix" evidence="19">
    <location>
        <begin position="1761"/>
        <end position="1774"/>
    </location>
</feature>
<feature type="strand" evidence="19">
    <location>
        <begin position="1789"/>
        <end position="1796"/>
    </location>
</feature>
<feature type="helix" evidence="19">
    <location>
        <begin position="1799"/>
        <end position="1801"/>
    </location>
</feature>
<feature type="helix" evidence="19">
    <location>
        <begin position="1803"/>
        <end position="1809"/>
    </location>
</feature>
<feature type="turn" evidence="20">
    <location>
        <begin position="1810"/>
        <end position="1812"/>
    </location>
</feature>
<feature type="strand" evidence="19">
    <location>
        <begin position="1821"/>
        <end position="1826"/>
    </location>
</feature>
<feature type="helix" evidence="19">
    <location>
        <begin position="1833"/>
        <end position="1843"/>
    </location>
</feature>
<feature type="strand" evidence="19">
    <location>
        <begin position="1849"/>
        <end position="1851"/>
    </location>
</feature>
<feature type="strand" evidence="19">
    <location>
        <begin position="1853"/>
        <end position="1857"/>
    </location>
</feature>
<feature type="helix" evidence="19">
    <location>
        <begin position="1859"/>
        <end position="1861"/>
    </location>
</feature>
<feature type="helix" evidence="19">
    <location>
        <begin position="1864"/>
        <end position="1880"/>
    </location>
</feature>
<feature type="strand" evidence="19">
    <location>
        <begin position="1887"/>
        <end position="1892"/>
    </location>
</feature>
<feature type="helix" evidence="20">
    <location>
        <begin position="1894"/>
        <end position="1896"/>
    </location>
</feature>
<feature type="helix" evidence="19">
    <location>
        <begin position="1901"/>
        <end position="1904"/>
    </location>
</feature>
<feature type="helix" evidence="19">
    <location>
        <begin position="1906"/>
        <end position="1908"/>
    </location>
</feature>
<feature type="helix" evidence="19">
    <location>
        <begin position="1918"/>
        <end position="1929"/>
    </location>
</feature>
<feature type="strand" evidence="19">
    <location>
        <begin position="1933"/>
        <end position="1935"/>
    </location>
</feature>
<feature type="helix" evidence="19">
    <location>
        <begin position="1938"/>
        <end position="1941"/>
    </location>
</feature>
<feature type="strand" evidence="19">
    <location>
        <begin position="1942"/>
        <end position="1945"/>
    </location>
</feature>
<feature type="strand" evidence="19">
    <location>
        <begin position="1947"/>
        <end position="1959"/>
    </location>
</feature>
<feature type="helix" evidence="19">
    <location>
        <begin position="1960"/>
        <end position="1973"/>
    </location>
</feature>
<feature type="strand" evidence="19">
    <location>
        <begin position="1974"/>
        <end position="1977"/>
    </location>
</feature>
<feature type="strand" evidence="19">
    <location>
        <begin position="1982"/>
        <end position="1987"/>
    </location>
</feature>
<feature type="strand" evidence="19">
    <location>
        <begin position="1989"/>
        <end position="1991"/>
    </location>
</feature>
<feature type="helix" evidence="19">
    <location>
        <begin position="1994"/>
        <end position="2001"/>
    </location>
</feature>
<feature type="turn" evidence="19">
    <location>
        <begin position="2002"/>
        <end position="2004"/>
    </location>
</feature>
<feature type="strand" evidence="19">
    <location>
        <begin position="2005"/>
        <end position="2010"/>
    </location>
</feature>
<feature type="strand" evidence="19">
    <location>
        <begin position="2015"/>
        <end position="2020"/>
    </location>
</feature>
<feature type="helix" evidence="19">
    <location>
        <begin position="2028"/>
        <end position="2036"/>
    </location>
</feature>
<feature type="strand" evidence="19">
    <location>
        <begin position="2040"/>
        <end position="2042"/>
    </location>
</feature>
<feature type="strand" evidence="19">
    <location>
        <begin position="2048"/>
        <end position="2050"/>
    </location>
</feature>
<feature type="strand" evidence="19">
    <location>
        <begin position="2055"/>
        <end position="2062"/>
    </location>
</feature>
<feature type="helix" evidence="19">
    <location>
        <begin position="2081"/>
        <end position="2084"/>
    </location>
</feature>
<feature type="helix" evidence="19">
    <location>
        <begin position="2085"/>
        <end position="2087"/>
    </location>
</feature>
<feature type="strand" evidence="19">
    <location>
        <begin position="2090"/>
        <end position="2092"/>
    </location>
</feature>
<feature type="turn" evidence="19">
    <location>
        <begin position="2096"/>
        <end position="2100"/>
    </location>
</feature>
<feature type="helix" evidence="19">
    <location>
        <begin position="2117"/>
        <end position="2120"/>
    </location>
</feature>
<feature type="helix" evidence="19">
    <location>
        <begin position="2123"/>
        <end position="2136"/>
    </location>
</feature>
<feature type="helix" evidence="19">
    <location>
        <begin position="2155"/>
        <end position="2165"/>
    </location>
</feature>
<feature type="strand" evidence="21">
    <location>
        <begin position="2168"/>
        <end position="2170"/>
    </location>
</feature>
<feature type="helix" evidence="19">
    <location>
        <begin position="2173"/>
        <end position="2192"/>
    </location>
</feature>
<feature type="helix" evidence="19">
    <location>
        <begin position="2195"/>
        <end position="2202"/>
    </location>
</feature>
<feature type="strand" evidence="19">
    <location>
        <begin position="2203"/>
        <end position="2205"/>
    </location>
</feature>
<feature type="helix" evidence="19">
    <location>
        <begin position="2208"/>
        <end position="2223"/>
    </location>
</feature>
<feature type="turn" evidence="19">
    <location>
        <begin position="2248"/>
        <end position="2250"/>
    </location>
</feature>
<feature type="helix" evidence="19">
    <location>
        <begin position="2251"/>
        <end position="2254"/>
    </location>
</feature>
<feature type="strand" evidence="19">
    <location>
        <begin position="2260"/>
        <end position="2262"/>
    </location>
</feature>
<feature type="strand" evidence="19">
    <location>
        <begin position="2266"/>
        <end position="2269"/>
    </location>
</feature>
<feature type="strand" evidence="19">
    <location>
        <begin position="2271"/>
        <end position="2273"/>
    </location>
</feature>
<feature type="strand" evidence="19">
    <location>
        <begin position="2276"/>
        <end position="2280"/>
    </location>
</feature>
<feature type="strand" evidence="19">
    <location>
        <begin position="2282"/>
        <end position="2285"/>
    </location>
</feature>
<feature type="strand" evidence="19">
    <location>
        <begin position="2289"/>
        <end position="2294"/>
    </location>
</feature>
<feature type="strand" evidence="19">
    <location>
        <begin position="2296"/>
        <end position="2298"/>
    </location>
</feature>
<feature type="strand" evidence="20">
    <location>
        <begin position="2301"/>
        <end position="2304"/>
    </location>
</feature>
<feature type="helix" evidence="19">
    <location>
        <begin position="2309"/>
        <end position="2317"/>
    </location>
</feature>
<feature type="strand" evidence="20">
    <location>
        <begin position="2326"/>
        <end position="2329"/>
    </location>
</feature>
<feature type="helix" evidence="19">
    <location>
        <begin position="2331"/>
        <end position="2341"/>
    </location>
</feature>
<feature type="strand" evidence="19">
    <location>
        <begin position="2352"/>
        <end position="2354"/>
    </location>
</feature>
<feature type="helix" evidence="19">
    <location>
        <begin position="2358"/>
        <end position="2373"/>
    </location>
</feature>
<feature type="strand" evidence="19">
    <location>
        <begin position="2377"/>
        <end position="2380"/>
    </location>
</feature>
<feature type="strand" evidence="19">
    <location>
        <begin position="2383"/>
        <end position="2387"/>
    </location>
</feature>
<feature type="helix" evidence="19">
    <location>
        <begin position="2388"/>
        <end position="2399"/>
    </location>
</feature>
<feature type="strand" evidence="19">
    <location>
        <begin position="2407"/>
        <end position="2411"/>
    </location>
</feature>
<feature type="helix" evidence="19">
    <location>
        <begin position="2418"/>
        <end position="2439"/>
    </location>
</feature>
<feature type="strand" evidence="19">
    <location>
        <begin position="2443"/>
        <end position="2449"/>
    </location>
</feature>
<feature type="helix" evidence="19">
    <location>
        <begin position="2456"/>
        <end position="2463"/>
    </location>
</feature>
<feature type="strand" evidence="19">
    <location>
        <begin position="2479"/>
        <end position="2485"/>
    </location>
</feature>
<feature type="helix" evidence="19">
    <location>
        <begin position="2493"/>
        <end position="2500"/>
    </location>
</feature>
<feature type="strand" evidence="19">
    <location>
        <begin position="2502"/>
        <end position="2504"/>
    </location>
</feature>
<feature type="strand" evidence="19">
    <location>
        <begin position="2510"/>
        <end position="2512"/>
    </location>
</feature>
<feature type="strand" evidence="19">
    <location>
        <begin position="2516"/>
        <end position="2521"/>
    </location>
</feature>
<feature type="helix" evidence="19">
    <location>
        <begin position="2522"/>
        <end position="2524"/>
    </location>
</feature>
<feature type="strand" evidence="19">
    <location>
        <begin position="2525"/>
        <end position="2527"/>
    </location>
</feature>
<feature type="turn" evidence="19">
    <location>
        <begin position="2537"/>
        <end position="2539"/>
    </location>
</feature>
<feature type="strand" evidence="20">
    <location>
        <begin position="2540"/>
        <end position="2542"/>
    </location>
</feature>
<feature type="strand" evidence="21">
    <location>
        <begin position="2548"/>
        <end position="2550"/>
    </location>
</feature>
<feature type="helix" evidence="19">
    <location>
        <begin position="2551"/>
        <end position="2563"/>
    </location>
</feature>
<feature type="helix" evidence="21">
    <location>
        <begin position="2565"/>
        <end position="2567"/>
    </location>
</feature>
<feature type="helix" evidence="19">
    <location>
        <begin position="2572"/>
        <end position="2588"/>
    </location>
</feature>
<feature type="strand" evidence="19">
    <location>
        <begin position="2589"/>
        <end position="2591"/>
    </location>
</feature>
<feature type="turn" evidence="19">
    <location>
        <begin position="2598"/>
        <end position="2600"/>
    </location>
</feature>
<feature type="helix" evidence="19">
    <location>
        <begin position="2601"/>
        <end position="2614"/>
    </location>
</feature>
<feature type="helix" evidence="19">
    <location>
        <begin position="2618"/>
        <end position="2630"/>
    </location>
</feature>
<feature type="helix" evidence="19">
    <location>
        <begin position="2643"/>
        <end position="2653"/>
    </location>
</feature>
<feature type="turn" evidence="19">
    <location>
        <begin position="2654"/>
        <end position="2657"/>
    </location>
</feature>
<feature type="helix" evidence="19">
    <location>
        <begin position="2661"/>
        <end position="2668"/>
    </location>
</feature>
<feature type="turn" evidence="19">
    <location>
        <begin position="2669"/>
        <end position="2671"/>
    </location>
</feature>
<feature type="helix" evidence="19">
    <location>
        <begin position="2674"/>
        <end position="2676"/>
    </location>
</feature>
<feature type="helix" evidence="19">
    <location>
        <begin position="2679"/>
        <end position="2696"/>
    </location>
</feature>
<feature type="helix" evidence="19">
    <location>
        <begin position="2707"/>
        <end position="2721"/>
    </location>
</feature>
<feature type="strand" evidence="19">
    <location>
        <begin position="2726"/>
        <end position="2729"/>
    </location>
</feature>
<feature type="strand" evidence="19">
    <location>
        <begin position="2734"/>
        <end position="2737"/>
    </location>
</feature>
<feature type="helix" evidence="19">
    <location>
        <begin position="2738"/>
        <end position="2746"/>
    </location>
</feature>
<feature type="strand" evidence="19">
    <location>
        <begin position="2749"/>
        <end position="2751"/>
    </location>
</feature>
<feature type="strand" evidence="19">
    <location>
        <begin position="2753"/>
        <end position="2755"/>
    </location>
</feature>
<feature type="turn" evidence="19">
    <location>
        <begin position="2756"/>
        <end position="2759"/>
    </location>
</feature>
<feature type="strand" evidence="19">
    <location>
        <begin position="2762"/>
        <end position="2768"/>
    </location>
</feature>
<feature type="helix" evidence="19">
    <location>
        <begin position="2776"/>
        <end position="2790"/>
    </location>
</feature>
<feature type="strand" evidence="19">
    <location>
        <begin position="2797"/>
        <end position="2805"/>
    </location>
</feature>
<feature type="turn" evidence="19">
    <location>
        <begin position="2807"/>
        <end position="2810"/>
    </location>
</feature>
<feature type="helix" evidence="19">
    <location>
        <begin position="2818"/>
        <end position="2820"/>
    </location>
</feature>
<feature type="helix" evidence="19">
    <location>
        <begin position="2821"/>
        <end position="2824"/>
    </location>
</feature>
<feature type="strand" evidence="19">
    <location>
        <begin position="2830"/>
        <end position="2832"/>
    </location>
</feature>
<feature type="turn" evidence="19">
    <location>
        <begin position="2836"/>
        <end position="2838"/>
    </location>
</feature>
<feature type="strand" evidence="19">
    <location>
        <begin position="2841"/>
        <end position="2848"/>
    </location>
</feature>
<feature type="helix" evidence="19">
    <location>
        <begin position="2852"/>
        <end position="2855"/>
    </location>
</feature>
<feature type="strand" evidence="19">
    <location>
        <begin position="2857"/>
        <end position="2862"/>
    </location>
</feature>
<feature type="helix" evidence="19">
    <location>
        <begin position="2868"/>
        <end position="2879"/>
    </location>
</feature>
<feature type="helix" evidence="19">
    <location>
        <begin position="2886"/>
        <end position="2889"/>
    </location>
</feature>
<feature type="helix" evidence="19">
    <location>
        <begin position="2890"/>
        <end position="2892"/>
    </location>
</feature>
<feature type="helix" evidence="19">
    <location>
        <begin position="2893"/>
        <end position="2906"/>
    </location>
</feature>
<feature type="strand" evidence="20">
    <location>
        <begin position="2908"/>
        <end position="2910"/>
    </location>
</feature>
<feature type="helix" evidence="19">
    <location>
        <begin position="2914"/>
        <end position="2931"/>
    </location>
</feature>
<feature type="helix" evidence="19">
    <location>
        <begin position="2937"/>
        <end position="2947"/>
    </location>
</feature>
<feature type="helix" evidence="19">
    <location>
        <begin position="2956"/>
        <end position="2960"/>
    </location>
</feature>
<feature type="helix" evidence="19">
    <location>
        <begin position="2975"/>
        <end position="2983"/>
    </location>
</feature>
<feature type="strand" evidence="21">
    <location>
        <begin position="2992"/>
        <end position="2994"/>
    </location>
</feature>
<feature type="strand" evidence="19">
    <location>
        <begin position="3002"/>
        <end position="3009"/>
    </location>
</feature>
<feature type="helix" evidence="19">
    <location>
        <begin position="3011"/>
        <end position="3017"/>
    </location>
</feature>
<feature type="strand" evidence="19">
    <location>
        <begin position="3026"/>
        <end position="3028"/>
    </location>
</feature>
<feature type="helix" evidence="19">
    <location>
        <begin position="3038"/>
        <end position="3055"/>
    </location>
</feature>
<feature type="strand" evidence="19">
    <location>
        <begin position="3059"/>
        <end position="3062"/>
    </location>
</feature>
<feature type="turn" evidence="19">
    <location>
        <begin position="3065"/>
        <end position="3067"/>
    </location>
</feature>
<feature type="turn" evidence="19">
    <location>
        <begin position="3069"/>
        <end position="3071"/>
    </location>
</feature>
<feature type="helix" evidence="19">
    <location>
        <begin position="3072"/>
        <end position="3076"/>
    </location>
</feature>
<feature type="strand" evidence="19">
    <location>
        <begin position="3080"/>
        <end position="3082"/>
    </location>
</feature>
<feature type="strand" evidence="19">
    <location>
        <begin position="3085"/>
        <end position="3092"/>
    </location>
</feature>
<feature type="strand" evidence="19">
    <location>
        <begin position="3095"/>
        <end position="3100"/>
    </location>
</feature>
<feature type="strand" evidence="19">
    <location>
        <begin position="3107"/>
        <end position="3112"/>
    </location>
</feature>
<feature type="helix" evidence="19">
    <location>
        <begin position="3113"/>
        <end position="3119"/>
    </location>
</feature>
<feature type="strand" evidence="19">
    <location>
        <begin position="3122"/>
        <end position="3124"/>
    </location>
</feature>
<feature type="helix" evidence="19">
    <location>
        <begin position="3125"/>
        <end position="3127"/>
    </location>
</feature>
<feature type="strand" evidence="19">
    <location>
        <begin position="3130"/>
        <end position="3132"/>
    </location>
</feature>
<feature type="turn" evidence="19">
    <location>
        <begin position="3136"/>
        <end position="3138"/>
    </location>
</feature>
<feature type="helix" evidence="19">
    <location>
        <begin position="3141"/>
        <end position="3158"/>
    </location>
</feature>
<feature type="strand" evidence="19">
    <location>
        <begin position="3164"/>
        <end position="3166"/>
    </location>
</feature>
<feature type="helix" evidence="19">
    <location>
        <begin position="3173"/>
        <end position="3176"/>
    </location>
</feature>
<feature type="helix" evidence="19">
    <location>
        <begin position="3184"/>
        <end position="3196"/>
    </location>
</feature>
<feature type="helix" evidence="19">
    <location>
        <begin position="3205"/>
        <end position="3218"/>
    </location>
</feature>
<feature type="helix" evidence="19">
    <location>
        <begin position="3223"/>
        <end position="3228"/>
    </location>
</feature>
<feature type="helix" evidence="19">
    <location>
        <begin position="3229"/>
        <end position="3231"/>
    </location>
</feature>
<feature type="strand" evidence="19">
    <location>
        <begin position="3232"/>
        <end position="3234"/>
    </location>
</feature>
<feature type="helix" evidence="19">
    <location>
        <begin position="3237"/>
        <end position="3248"/>
    </location>
</feature>
<feature type="helix" evidence="19">
    <location>
        <begin position="3255"/>
        <end position="3262"/>
    </location>
</feature>
<feature type="strand" evidence="19">
    <location>
        <begin position="3263"/>
        <end position="3265"/>
    </location>
</feature>
<feature type="strand" evidence="19">
    <location>
        <begin position="3271"/>
        <end position="3281"/>
    </location>
</feature>
<feature type="helix" evidence="19">
    <location>
        <begin position="3288"/>
        <end position="3294"/>
    </location>
</feature>
<feature type="turn" evidence="19">
    <location>
        <begin position="3295"/>
        <end position="3299"/>
    </location>
</feature>
<feature type="strand" evidence="19">
    <location>
        <begin position="3304"/>
        <end position="3307"/>
    </location>
</feature>
<feature type="helix" evidence="19">
    <location>
        <begin position="3308"/>
        <end position="3310"/>
    </location>
</feature>
<feature type="helix" evidence="19">
    <location>
        <begin position="3314"/>
        <end position="3325"/>
    </location>
</feature>
<feature type="strand" evidence="19">
    <location>
        <begin position="3327"/>
        <end position="3344"/>
    </location>
</feature>
<feature type="helix" evidence="19">
    <location>
        <begin position="3349"/>
        <end position="3364"/>
    </location>
</feature>
<feature type="strand" evidence="19">
    <location>
        <begin position="3371"/>
        <end position="3378"/>
    </location>
</feature>
<feature type="turn" evidence="19">
    <location>
        <begin position="3381"/>
        <end position="3386"/>
    </location>
</feature>
<feature type="strand" evidence="19">
    <location>
        <begin position="3397"/>
        <end position="3400"/>
    </location>
</feature>
<feature type="strand" evidence="19">
    <location>
        <begin position="3408"/>
        <end position="3410"/>
    </location>
</feature>
<feature type="helix" evidence="19">
    <location>
        <begin position="3414"/>
        <end position="3419"/>
    </location>
</feature>
<feature type="helix" evidence="19">
    <location>
        <begin position="3422"/>
        <end position="3425"/>
    </location>
</feature>
<feature type="helix" evidence="19">
    <location>
        <begin position="3477"/>
        <end position="3489"/>
    </location>
</feature>
<feature type="strand" evidence="19">
    <location>
        <begin position="3495"/>
        <end position="3498"/>
    </location>
</feature>
<feature type="helix" evidence="19">
    <location>
        <begin position="3502"/>
        <end position="3511"/>
    </location>
</feature>
<feature type="strand" evidence="19">
    <location>
        <begin position="3512"/>
        <end position="3517"/>
    </location>
</feature>
<feature type="helix" evidence="19">
    <location>
        <begin position="3518"/>
        <end position="3538"/>
    </location>
</feature>
<feature type="strand" evidence="19">
    <location>
        <begin position="3539"/>
        <end position="3542"/>
    </location>
</feature>
<feature type="strand" evidence="19">
    <location>
        <begin position="3544"/>
        <end position="3547"/>
    </location>
</feature>
<feature type="helix" evidence="19">
    <location>
        <begin position="3549"/>
        <end position="3554"/>
    </location>
</feature>
<feature type="helix" evidence="19">
    <location>
        <begin position="3557"/>
        <end position="3563"/>
    </location>
</feature>
<feature type="helix" evidence="19">
    <location>
        <begin position="3566"/>
        <end position="3589"/>
    </location>
</feature>
<feature type="strand" evidence="19">
    <location>
        <begin position="3591"/>
        <end position="3593"/>
    </location>
</feature>
<feature type="helix" evidence="19">
    <location>
        <begin position="3596"/>
        <end position="3599"/>
    </location>
</feature>
<feature type="strand" evidence="19">
    <location>
        <begin position="3600"/>
        <end position="3602"/>
    </location>
</feature>
<feature type="helix" evidence="19">
    <location>
        <begin position="3605"/>
        <end position="3614"/>
    </location>
</feature>
<feature type="turn" evidence="19">
    <location>
        <begin position="3618"/>
        <end position="3620"/>
    </location>
</feature>
<feature type="strand" evidence="19">
    <location>
        <begin position="3654"/>
        <end position="3656"/>
    </location>
</feature>
<feature type="helix" evidence="19">
    <location>
        <begin position="3658"/>
        <end position="3675"/>
    </location>
</feature>
<feature type="strand" evidence="19">
    <location>
        <begin position="3678"/>
        <end position="3680"/>
    </location>
</feature>
<feature type="helix" evidence="19">
    <location>
        <begin position="3681"/>
        <end position="3691"/>
    </location>
</feature>
<feature type="helix" evidence="19">
    <location>
        <begin position="3693"/>
        <end position="3698"/>
    </location>
</feature>
<feature type="helix" evidence="19">
    <location>
        <begin position="3703"/>
        <end position="3721"/>
    </location>
</feature>
<feature type="strand" evidence="20">
    <location>
        <begin position="3725"/>
        <end position="3727"/>
    </location>
</feature>
<feature type="helix" evidence="19">
    <location>
        <begin position="3728"/>
        <end position="3745"/>
    </location>
</feature>
<feature type="strand" evidence="20">
    <location>
        <begin position="3748"/>
        <end position="3750"/>
    </location>
</feature>
<feature type="strand" evidence="21">
    <location>
        <begin position="3758"/>
        <end position="3761"/>
    </location>
</feature>
<feature type="helix" evidence="19">
    <location>
        <begin position="3763"/>
        <end position="3783"/>
    </location>
</feature>
<feature type="helix" evidence="19">
    <location>
        <begin position="3788"/>
        <end position="3799"/>
    </location>
</feature>
<feature type="strand" evidence="19">
    <location>
        <begin position="3802"/>
        <end position="3805"/>
    </location>
</feature>
<feature type="helix" evidence="19">
    <location>
        <begin position="3808"/>
        <end position="3823"/>
    </location>
</feature>
<feature type="strand" evidence="19">
    <location>
        <begin position="3824"/>
        <end position="3827"/>
    </location>
</feature>
<feature type="helix" evidence="19">
    <location>
        <begin position="3829"/>
        <end position="3838"/>
    </location>
</feature>
<feature type="helix" evidence="19">
    <location>
        <begin position="3840"/>
        <end position="3846"/>
    </location>
</feature>
<feature type="turn" evidence="19">
    <location>
        <begin position="3849"/>
        <end position="3851"/>
    </location>
</feature>
<feature type="helix" evidence="19">
    <location>
        <begin position="3857"/>
        <end position="3889"/>
    </location>
</feature>
<feature type="helix" evidence="19">
    <location>
        <begin position="3895"/>
        <end position="3909"/>
    </location>
</feature>
<feature type="helix" evidence="19">
    <location>
        <begin position="3918"/>
        <end position="3940"/>
    </location>
</feature>
<feature type="turn" evidence="19">
    <location>
        <begin position="3948"/>
        <end position="3950"/>
    </location>
</feature>
<feature type="strand" evidence="20">
    <location>
        <begin position="3955"/>
        <end position="3959"/>
    </location>
</feature>
<feature type="strand" evidence="20">
    <location>
        <begin position="3965"/>
        <end position="3967"/>
    </location>
</feature>
<feature type="helix" evidence="19">
    <location>
        <begin position="3968"/>
        <end position="3975"/>
    </location>
</feature>
<feature type="turn" evidence="19">
    <location>
        <begin position="3976"/>
        <end position="3978"/>
    </location>
</feature>
<feature type="turn" evidence="19">
    <location>
        <begin position="3983"/>
        <end position="3985"/>
    </location>
</feature>
<feature type="helix" evidence="19">
    <location>
        <begin position="4000"/>
        <end position="4025"/>
    </location>
</feature>
<feature type="turn" evidence="19">
    <location>
        <begin position="4026"/>
        <end position="4028"/>
    </location>
</feature>
<feature type="strand" evidence="19">
    <location>
        <begin position="4030"/>
        <end position="4032"/>
    </location>
</feature>
<feature type="helix" evidence="19">
    <location>
        <begin position="4036"/>
        <end position="4044"/>
    </location>
</feature>
<feature type="strand" evidence="19">
    <location>
        <begin position="4069"/>
        <end position="4072"/>
    </location>
</feature>
<feature type="strand" evidence="20">
    <location>
        <begin position="4075"/>
        <end position="4077"/>
    </location>
</feature>
<feature type="helix" evidence="19">
    <location>
        <begin position="4083"/>
        <end position="4088"/>
    </location>
</feature>
<feature type="helix" evidence="19">
    <location>
        <begin position="4093"/>
        <end position="4095"/>
    </location>
</feature>
<feature type="helix" evidence="19">
    <location>
        <begin position="4097"/>
        <end position="4110"/>
    </location>
</feature>
<feature type="strand" evidence="19">
    <location>
        <begin position="4113"/>
        <end position="4115"/>
    </location>
</feature>
<feature type="helix" evidence="19">
    <location>
        <begin position="4117"/>
        <end position="4137"/>
    </location>
</feature>
<feature type="helix" evidence="19">
    <location>
        <begin position="4143"/>
        <end position="4155"/>
    </location>
</feature>
<feature type="turn" evidence="20">
    <location>
        <begin position="4161"/>
        <end position="4163"/>
    </location>
</feature>
<feature type="strand" evidence="19">
    <location>
        <begin position="4166"/>
        <end position="4168"/>
    </location>
</feature>
<feature type="helix" evidence="19">
    <location>
        <begin position="4172"/>
        <end position="4197"/>
    </location>
</feature>
<feature type="turn" evidence="19">
    <location>
        <begin position="4202"/>
        <end position="4204"/>
    </location>
</feature>
<feature type="helix" evidence="19">
    <location>
        <begin position="4205"/>
        <end position="4218"/>
    </location>
</feature>
<feature type="helix" evidence="19">
    <location>
        <begin position="4223"/>
        <end position="4235"/>
    </location>
</feature>
<feature type="helix" evidence="19">
    <location>
        <begin position="4238"/>
        <end position="4244"/>
    </location>
</feature>
<feature type="strand" evidence="19">
    <location>
        <begin position="4246"/>
        <end position="4248"/>
    </location>
</feature>
<feature type="helix" evidence="19">
    <location>
        <begin position="4252"/>
        <end position="4254"/>
    </location>
</feature>
<feature type="helix" evidence="19">
    <location>
        <begin position="4257"/>
        <end position="4261"/>
    </location>
</feature>
<feature type="helix" evidence="19">
    <location>
        <begin position="4272"/>
        <end position="4275"/>
    </location>
</feature>
<feature type="helix" evidence="19">
    <location>
        <begin position="4280"/>
        <end position="4292"/>
    </location>
</feature>
<feature type="helix" evidence="19">
    <location>
        <begin position="4297"/>
        <end position="4303"/>
    </location>
</feature>
<feature type="helix" evidence="19">
    <location>
        <begin position="4310"/>
        <end position="4330"/>
    </location>
</feature>
<feature type="strand" evidence="19">
    <location>
        <begin position="4331"/>
        <end position="4334"/>
    </location>
</feature>
<feature type="turn" evidence="19">
    <location>
        <begin position="4338"/>
        <end position="4342"/>
    </location>
</feature>
<feature type="helix" evidence="19">
    <location>
        <begin position="4343"/>
        <end position="4352"/>
    </location>
</feature>
<feature type="turn" evidence="19">
    <location>
        <begin position="4354"/>
        <end position="4356"/>
    </location>
</feature>
<feature type="helix" evidence="19">
    <location>
        <begin position="4359"/>
        <end position="4369"/>
    </location>
</feature>
<feature type="turn" evidence="19">
    <location>
        <begin position="4374"/>
        <end position="4377"/>
    </location>
</feature>
<feature type="strand" evidence="20">
    <location>
        <begin position="4381"/>
        <end position="4384"/>
    </location>
</feature>
<feature type="helix" evidence="19">
    <location>
        <begin position="4385"/>
        <end position="4402"/>
    </location>
</feature>
<feature type="helix" evidence="19">
    <location>
        <begin position="4406"/>
        <end position="4408"/>
    </location>
</feature>
<feature type="helix" evidence="19">
    <location>
        <begin position="4409"/>
        <end position="4416"/>
    </location>
</feature>
<feature type="helix" evidence="19">
    <location>
        <begin position="4418"/>
        <end position="4421"/>
    </location>
</feature>
<feature type="strand" evidence="20">
    <location>
        <begin position="4422"/>
        <end position="4425"/>
    </location>
</feature>
<feature type="helix" evidence="19">
    <location>
        <begin position="4523"/>
        <end position="4543"/>
    </location>
</feature>
<feature type="helix" evidence="19">
    <location>
        <begin position="4545"/>
        <end position="4551"/>
    </location>
</feature>
<feature type="helix" evidence="19">
    <location>
        <begin position="4560"/>
        <end position="4577"/>
    </location>
</feature>
<feature type="strand" evidence="19">
    <location>
        <begin position="4578"/>
        <end position="4580"/>
    </location>
</feature>
<feature type="helix" evidence="19">
    <location>
        <begin position="4582"/>
        <end position="4595"/>
    </location>
</feature>
<feature type="helix" evidence="19">
    <location>
        <begin position="4614"/>
        <end position="4632"/>
    </location>
</feature>
<feature type="turn" evidence="19">
    <location>
        <begin position="4636"/>
        <end position="4638"/>
    </location>
</feature>
<feature type="helix" evidence="19">
    <location>
        <begin position="4639"/>
        <end position="4647"/>
    </location>
</feature>
<feature type="turn" evidence="19">
    <location>
        <begin position="4650"/>
        <end position="4654"/>
    </location>
</feature>
<feature type="helix" evidence="19">
    <location>
        <begin position="4656"/>
        <end position="4659"/>
    </location>
</feature>
<feature type="turn" evidence="19">
    <location>
        <begin position="4660"/>
        <end position="4663"/>
    </location>
</feature>
<feature type="helix" evidence="19">
    <location>
        <begin position="4666"/>
        <end position="4668"/>
    </location>
</feature>
<feature type="strand" evidence="19">
    <location>
        <begin position="4669"/>
        <end position="4672"/>
    </location>
</feature>
<feature type="strand" evidence="20">
    <location>
        <begin position="4677"/>
        <end position="4680"/>
    </location>
</feature>
<feature type="turn" evidence="19">
    <location>
        <begin position="4681"/>
        <end position="4684"/>
    </location>
</feature>
<feature type="helix" evidence="19">
    <location>
        <begin position="4692"/>
        <end position="4701"/>
    </location>
</feature>
<feature type="turn" evidence="19">
    <location>
        <begin position="4702"/>
        <end position="4706"/>
    </location>
</feature>
<feature type="helix" evidence="19">
    <location>
        <begin position="4709"/>
        <end position="4716"/>
    </location>
</feature>
<feature type="helix" evidence="19">
    <location>
        <begin position="4718"/>
        <end position="4721"/>
    </location>
</feature>
<feature type="helix" evidence="19">
    <location>
        <begin position="4722"/>
        <end position="4726"/>
    </location>
</feature>
<feature type="helix" evidence="19">
    <location>
        <begin position="4727"/>
        <end position="4740"/>
    </location>
</feature>
<feature type="strand" evidence="19">
    <location>
        <begin position="4743"/>
        <end position="4745"/>
    </location>
</feature>
<feature type="helix" evidence="19">
    <location>
        <begin position="4752"/>
        <end position="4756"/>
    </location>
</feature>
<feature type="helix" evidence="19">
    <location>
        <begin position="4762"/>
        <end position="4782"/>
    </location>
</feature>
<feature type="turn" evidence="19">
    <location>
        <begin position="4783"/>
        <end position="4785"/>
    </location>
</feature>
<feature type="helix" evidence="19">
    <location>
        <begin position="4786"/>
        <end position="4789"/>
    </location>
</feature>
<feature type="strand" evidence="19">
    <location>
        <begin position="4798"/>
        <end position="4801"/>
    </location>
</feature>
<feature type="strand" evidence="19">
    <location>
        <begin position="4807"/>
        <end position="4809"/>
    </location>
</feature>
<feature type="strand" evidence="19">
    <location>
        <begin position="4816"/>
        <end position="4819"/>
    </location>
</feature>
<feature type="helix" evidence="19">
    <location>
        <begin position="4821"/>
        <end position="4844"/>
    </location>
</feature>
<feature type="helix" evidence="20">
    <location>
        <begin position="4855"/>
        <end position="4857"/>
    </location>
</feature>
<feature type="helix" evidence="19">
    <location>
        <begin position="4860"/>
        <end position="4862"/>
    </location>
</feature>
<feature type="helix" evidence="19">
    <location>
        <begin position="4868"/>
        <end position="4871"/>
    </location>
</feature>
<feature type="helix" evidence="19">
    <location>
        <begin position="4873"/>
        <end position="4877"/>
    </location>
</feature>
<feature type="strand" evidence="19">
    <location>
        <begin position="4880"/>
        <end position="4884"/>
    </location>
</feature>
<feature type="strand" evidence="19">
    <location>
        <begin position="4891"/>
        <end position="4894"/>
    </location>
</feature>
<feature type="helix" evidence="19">
    <location>
        <begin position="4896"/>
        <end position="4904"/>
    </location>
</feature>
<feature type="turn" evidence="19">
    <location>
        <begin position="4905"/>
        <end position="4907"/>
    </location>
</feature>
<feature type="strand" evidence="19">
    <location>
        <begin position="4908"/>
        <end position="4910"/>
    </location>
</feature>
<feature type="strand" evidence="19">
    <location>
        <begin position="4916"/>
        <end position="4918"/>
    </location>
</feature>
<feature type="helix" evidence="19">
    <location>
        <begin position="4931"/>
        <end position="4940"/>
    </location>
</feature>
<feature type="helix" evidence="19">
    <location>
        <begin position="4948"/>
        <end position="4956"/>
    </location>
</feature>
<feature type="helix" evidence="19">
    <location>
        <begin position="4961"/>
        <end position="4979"/>
    </location>
</feature>
<feature type="strand" evidence="19">
    <location>
        <begin position="4985"/>
        <end position="4988"/>
    </location>
</feature>
<feature type="helix" evidence="19">
    <location>
        <begin position="4989"/>
        <end position="4993"/>
    </location>
</feature>
<feature type="turn" evidence="19">
    <location>
        <begin position="4994"/>
        <end position="4996"/>
    </location>
</feature>
<feature type="helix" evidence="19">
    <location>
        <begin position="5004"/>
        <end position="5010"/>
    </location>
</feature>
<feature type="helix" evidence="19">
    <location>
        <begin position="5015"/>
        <end position="5017"/>
    </location>
</feature>
<feature type="helix" evidence="19">
    <location>
        <begin position="5018"/>
        <end position="5035"/>
    </location>
</feature>
<feature type="strand" evidence="21">
    <location>
        <begin position="5042"/>
        <end position="5044"/>
    </location>
</feature>
<feature type="helix" evidence="19">
    <location>
        <begin position="5046"/>
        <end position="5048"/>
    </location>
</feature>
<feature type="helix" evidence="19">
    <location>
        <begin position="5054"/>
        <end position="5065"/>
    </location>
</feature>
<feature type="helix" evidence="19">
    <location>
        <begin position="5069"/>
        <end position="5083"/>
    </location>
</feature>
<feature type="strand" evidence="19">
    <location>
        <begin position="5090"/>
        <end position="5092"/>
    </location>
</feature>
<feature type="helix" evidence="19">
    <location>
        <begin position="5099"/>
        <end position="5106"/>
    </location>
</feature>
<feature type="turn" evidence="20">
    <location>
        <begin position="5109"/>
        <end position="5111"/>
    </location>
</feature>
<feature type="helix" evidence="19">
    <location>
        <begin position="5115"/>
        <end position="5120"/>
    </location>
</feature>
<feature type="helix" evidence="20">
    <location>
        <begin position="5128"/>
        <end position="5130"/>
    </location>
</feature>
<feature type="helix" evidence="19">
    <location>
        <begin position="5132"/>
        <end position="5148"/>
    </location>
</feature>
<protein>
    <recommendedName>
        <fullName>E3 ubiquitin-protein ligase RNF213</fullName>
        <ecNumber evidence="1">2.3.2.27</ecNumber>
        <ecNumber evidence="11">3.6.4.-</ecNumber>
    </recommendedName>
    <alternativeName>
        <fullName evidence="15">E3 ubiquitin-lipopolysaccharide ligase RNF213</fullName>
        <ecNumber evidence="1">2.3.2.-</ecNumber>
    </alternativeName>
    <alternativeName>
        <fullName evidence="14">Mysterin</fullName>
    </alternativeName>
    <alternativeName>
        <fullName evidence="15">RING finger protein 213</fullName>
    </alternativeName>
</protein>
<comment type="function">
    <text evidence="1 11 13">Atypical E3 ubiquitin ligase that can catalyze ubiquitination of both proteins and lipids, and which is involved in various processes, such as lipid metabolism, angiogenesis and cell-autonomous immunity (PubMed:32573437). Acts as a key immune sensor by catalyzing ubiquitination of the lipid A moiety of bacterial lipopolysaccharide (LPS) via its RZ-type zinc-finger: restricts the proliferation of cytosolic bacteria, such as Salmonella, by generating the bacterial ubiquitin coat through the ubiquitination of LPS (PubMed:34012115). Also acts indirectly by mediating the recruitment of the LUBAC complex, which conjugates linear polyubiquitin chains (By similarity). Ubiquitination of LPS triggers cell-autonomous immunity, such as antibacterial autophagy, leading to degradation of the microbial invader (By similarity). Involved in lipid metabolism by regulating fat storage and lipid droplet formation; act by inhibiting the lipolytic process (By similarity). Also regulates lipotoxicity by inhibiting desaturation of fatty acids (By similarity). Also acts as an E3 ubiquitin-protein ligase via its RING-type zinc finger: mediates 'Lys-63'-linked ubiquitination of target proteins (By similarity). Involved in the non-canonical Wnt signaling pathway in vascular development: acts by mediating ubiquitination and degradation of FLNA and NFATC2 downstream of RSPO3, leading to inhibit the non-canonical Wnt signaling pathway and promoting vessel regression (By similarity). Also has ATPase activity; ATPase activity is required for ubiquitination of LPS (PubMed:32573437).</text>
</comment>
<comment type="catalytic activity">
    <reaction evidence="1">
        <text>S-ubiquitinyl-[E2 ubiquitin-conjugating enzyme]-L-cysteine + [acceptor protein]-L-lysine = [E2 ubiquitin-conjugating enzyme]-L-cysteine + N(6)-ubiquitinyl-[acceptor protein]-L-lysine.</text>
        <dbReference type="EC" id="2.3.2.27"/>
    </reaction>
</comment>
<comment type="catalytic activity">
    <reaction evidence="11">
        <text>ATP + H2O = ADP + phosphate + H(+)</text>
        <dbReference type="Rhea" id="RHEA:13065"/>
        <dbReference type="ChEBI" id="CHEBI:15377"/>
        <dbReference type="ChEBI" id="CHEBI:15378"/>
        <dbReference type="ChEBI" id="CHEBI:30616"/>
        <dbReference type="ChEBI" id="CHEBI:43474"/>
        <dbReference type="ChEBI" id="CHEBI:456216"/>
    </reaction>
    <physiologicalReaction direction="left-to-right" evidence="11">
        <dbReference type="Rhea" id="RHEA:13066"/>
    </physiologicalReaction>
</comment>
<comment type="pathway">
    <text evidence="1">Protein modification; protein ubiquitination.</text>
</comment>
<comment type="subunit">
    <text evidence="1 11">Monomer (PubMed:32573437). Interacts with UBE2L3/UBCH7; UBE2L3/UBCH7 is the most efficient ubiquitin-conjugating enzyme E2 for the ubiquitin ligase activity (PubMed:32573437). Interacts with UBE2N/UBC13; promoting 'Lys-63'-linked ubiquitination of target proteins (By similarity).</text>
</comment>
<comment type="subcellular location">
    <subcellularLocation>
        <location evidence="1">Cytoplasm</location>
        <location evidence="1">Cytosol</location>
    </subcellularLocation>
    <subcellularLocation>
        <location evidence="1">Lipid droplet</location>
    </subcellularLocation>
</comment>
<comment type="domain">
    <text evidence="11">Composed of an N-terminal stalk, a dynein-like core comprised of two catalytically active and four inactive ATPase domains, and a C-terminal E3 module (PubMed:32573437). The ATPase regions do not generate movement but rather act like an intricate molecular 'switch' (PubMed:32573437).</text>
</comment>
<comment type="domain">
    <text evidence="1">The RING-type zinc finger domain is required for the ubiquitin-protein ligase activity.</text>
</comment>
<comment type="domain">
    <text evidence="1">The RZ-type (RNF213-ZNFX1) zinc-finger is required for the ubiquitination of the lipid A moiety of bacterial lipopolysaccharide (LPS).</text>
</comment>
<comment type="disruption phenotype">
    <text evidence="6 7 8 12">No visible phenotype (PubMed:23410753, PubMed:24440776). Males and female are fertile and produce normal-sized litters (PubMed:23410753, PubMed:24440776). Mice do not spontaneously develop Moyamoya disease, a chronic occlusive cerebrovascular disease (PubMed:24440776). Mice are however more susceptible to Rift Valley fever virus infection (PubMed:33420513). Mice show elevated expression of MMP9 (PubMed:25383461).</text>
</comment>
<comment type="similarity">
    <text evidence="15">Belongs to the AAA ATPase family.</text>
</comment>
<comment type="caution">
    <text evidence="1 11">The stoichiometry is unclear: was initially thought to form homohexamers (By similarity). However, the electron microscopy structure showed that it is monomeric and is composed of six ATPase modules within a single polypeptide chain (PubMed:32573437).</text>
</comment>
<comment type="sequence caution" evidence="15">
    <conflict type="erroneous initiation">
        <sequence resource="EMBL-CDS" id="BAC37048"/>
    </conflict>
    <text>Truncated N-terminus.</text>
</comment>
<accession>E9Q555</accession>
<accession>F7A6H4</accession>
<accession>Q8BVK6</accession>
<sequence length="5148" mass="584258">MECPQCGHVSSEKAPKFCSECGQKLPSAATVQGDLKNDNTLVVSSTPEGKTEQGAVLREEEVLLSSTDPGKELEKPEESDSNASWTTQMSKKEKRRRKRQGTISSSEAPSSGLWSLDMPPSPGSHNSALPQNQAQQGGAASQPGHPLDTENMPMEDGFVHTEGSGSPLQGQAAERTDAQSNLAPSDLAEVKDLNTSKPSVDKGLPLDGGPALSAFKGHPKMTDASQKAPLPESKGETSGQEKKVPPIDAAASPVKTAGKETGEDVRKPKPSPVSPVASKHGDQEAELKGKLATPVRKSNEGGNTQPEDQRKPGEGRNFAAAVKTQQAAAPQQAAAPEPTSAFNPRDTVTVYFHAIVSRHFGFNPEEHKVYVRGGEGLGQKGWTDACEMYCTQDLHDLGSLVEGKMDIPRQSLDKPIPYKYVIHRGGSSKDTVEYEFIYEQAQKKGEHVNRCLRVVSTSLGNGDWHQYDDIICMRSTGFFQQAKNRILDSTRKELLKGKKQAAVVMLDRIFSVLQPWSDINLQSFMTQFLQFYSVVREPMIHDGRARKWTSLQYEEKEVWTNLWEHVKKQMAPFLEGKSGESLPADCPVRSKLTLGLSILFMVEAAEFTVPKKDLDSLCYLLIPSAGSPEALHSDLSPVLRIRQRWRIYLTNLCLRCIDERCDRWLGILPLLHTCMQKSPPKKNSKSQPEDTWAGLEGISFSEFRDKAPTRSQPLQFMQSKMALLRVDEYLFRSWLSVVPLESLSSYLENSIDYLSDVPVRVLDCLQGISYRLPGLRKISNQNMKKDVENVFKMLMHLVDIYQHRIFGENLLQIYLTECLTLHETVCNITANHQFFEIPALSAELICKLLELSPPGHTDEGLPEKSYEDLVTSTLQEALATTRNWLRSLFKSRMLSISSAYVRLTYSEEMAVWRRLVEIGFPEKHGWKGSLLGDMEGRLKQEPPRLQISFFCSSQCRDGGLHDSVSRSFEKCVIEAVSSACQSQTSVLEGLSCQDLQKFGTLLSAVITKSWPVHNGEPVFDVDEIFKYLLKWPDVRQLFELCGTNEKIIDNITEEGRQLMATAESVFQKVAGELENGTIVVGQLELILEHQSQFLDIWNLNRRRLPSQEKACDVRSLLKRRRDDLLFLKQEKRYVESLLRQLGRVKHLVQVDFGNIEIIHSQDLSNKKLNEAVIKLPNSSSYKRETHYCLSPDIREMASKLDSLKDSHIFQDFWQETAESLNTLDKDPRELKVSLPEVLEYLYNPCYDNFYTLYENLKSGKITFAEVDAIFKDFVDKYDELKNDLKFMCTMNPQDQKGWISERVGQIKEYHTLHQAVSSAKVILQVRRALGVTGDFSVLNPLLNFADSFEDFGNEKLDQISPQFIKAKQLLQDISEPRQRCLEELARQTELVAWLHKALEDINELKVFVDLASISAGENDIDVDRVACFHDAVQGYASLLYKMDERTNFSDFMNHLQELWRALDNDQHLPDKLKDSARNLEWLKTVKESHGSVELSSLSLATAINSRGVYVIEAPKDGQKISPDTVLRLLLPDGHGYPEALRTYSTEELKELLNKLMLMSGKKDHNSNTEVEKFSEVFSNMQRLVHVFIKLHCAGNMLFRTWTAKVYCCPDGGIFMNFGLELLSQLTEKGDVIQLLGALCRQMEDFLDNWKTVVAQKRAEHFYLNFYTAEQLVYLSSELRKPRPSEAALMMLSFIKGKCTVQDLVQATSACESKADRYCLREVMKKLPQQLLSEPSLMGKLQVIMMQSLVYMSAFLPHCLDLDALGRCLAHLATMGGTPVERPLPKGLQAGQPNLILCGHSEVLPAALAIYMQAPRQPLPTFDEVLLCTPATTIEEVELLLRRCLTSGSQGHKVYSLLFADQLSYEVGCQAEEFFQSLCTRAHREDYQLVILCDAAREHCYIPSTFSQYKVPLVPQAPLPNIQAYLQSHYQVPKRLLSAATVFRDGLCVGIVTSERAGVGKSLYVNTLHTKLKAKLRDETVPLKIIRLTEPHLDENQVLSALLPFLKEKYQKMPVIFHIDISTSVQTGIPIFLFKLLILQYLMDINGKIWRRSPGHLYLVEIPQGLSVQPKRSSKLNARAPLFKFLDLFPKVTCRPPKEVIDMELTPERSHTDPAMDPVEFCSEAFQRPYQYLKRFHQQQNLDTFQYEKGSVEGSPEECLQHFLIYCGLINPSWSELRNFAWFLNCQLKDCEASIFCKSAFTGDTLRGFKNFVVTFMILMARDFATPTLHTSDQSPGRQSVTIGEVVEEDLAPFSLRKRWESEPHPYVFFNGDHMTMTFIGFHLETNNNGYVDAINPSNGKVIKKDVMTKELFDGLRLQRVPFNIDFDNLPRYEKLERLCLALGIEWPIDPDETYELTTDNMLKILAIEMRFRCGIPVIIMGETGCGKTRLIKFLSDLKRGSVEAETMKLVKVHGGTTPSMIYSKVKEAERTAFSNKAQHKLDTILFFDEANTTEAVSCIKEILCDRTVDGEHLHEDSGLHIIAACNPYRKHSQEMILRLESAGLGYRVSAEETADRLGSIPLRQLVYRVHALPPSLIPLVWDFGQLNDSAEKLYIQQIVQRLVDSVSVNPSETCVIADVLSASQMFMRKRENECGFVSLRDVERCVKVFRWFHDHSDMLLKELDKFLHESSDSTHTFERDPVLWSLVMAIGVCYHASLEEKASYRTAIARCFPKPYNSSRAILDEVTHVQDLFLRGAPIRTNIARNLALKENVFMMVICIELKIPLFLVGKPGSSKSLAKIIVADAMQGQAAFSELFRCLKQVHLVSFQCSPHSTPQGIISTFKQCARFQQGKDLGQYVSVVVLDEVGLAEDSPKMPLKTLHPLLEDGCIEDDPAPYKKVGFVGISNWALDPAKMNRGIFVSRGSPNEKELIESAEGICSSDRLVQDKIRGYFAPFAKAYETVCQKQDKEFFGLRDYYSLIKMVFAKAKASKRGLSPQDITHAVLRNFSGKDNIQALSIFTASLPEARYKEEVSTVELIKQNIYPGPQASSRGLDGAESRYLLVLTRNYVALQILQQTFFEGQQPEIIFGSSFPQDQEYTQICRNINRVKICMETGKMVVLLNLQNLYESLYDALNQYYVYLGGQKYVDLGLGTHRVKCRVHTAFRLIVIEEKDVVYKQFPVPLINRLEKHYLDMNTVLQPWQKSIVQELQQWAHEFADVKADQFIARHKYSPADVFIGYHSDACASVVLQAVERQGCRDLTEELYRKVSEEARSILLDCATPDAVVRLSGSSLGSFTAKQLSQEYYYAQQHNSFVDFLQAHLRMTHHECRAVFTEITTFSRLLTGNDCDVLASELRGLASKPVVLSLQQYDTEYSFLKDVRSWLTNPGKRKVLVIQADFDDGTRSAQLVASAKYTAINEINKTQGTKDFVFVYFVTKLSRMGSGTSYVGFHGGLWRSVHIDDLRRSTIMASDVTKLQNVTISQLFKPEDKPEQEEMEIETSQSKELAEEQMEVEDSEEMKKASDPRSCDCSQFLDTTRLVQSCVQGAVGMLRDQNESCARNMRRVTILLDLLNEDNTRNASFLRESKMRLHVLLNKQEENQVRSLKEWVTREAANQDALQEAGTFRHTLWKRVQDVVTPILASMIAHIDRDGNLELLAQPDSPAWVQDLWMFIYSDIKFLNISLVLNNTRSNSEMSFILVQSHMNLLKDAYNAVPFSWRIRDYLEELWVQAQYITDTEGLSKKFVEIFQKTPLGVFLAQFPVAQQQKLLQSYLKDFLLLTMKVSSREELMFLQMALWSCLRELQEASGTPDETYKFPLSLPWVHLAFQHFRTRLQNFSRILTIHPQVLSSLSQAAEKHSLAGCEMTLDAFAAMACAEMLKGDLLKPSPKAWLQLVKNLSTPLELVCSEGYLCDSGSMTRSVIQEVRALWNRIFSIALFVEHVLLGTESHIPELSPLVTTYVSLLDKCLEEDSNLKTCRPFVAVMTTLCDCKDKASKKFSRFGIQPCFICHGDAQDPVCLPCDHVYCLRCIQTWLIPGQMMCPYCLTDLPDKFSPTVSQDHRKAIEKHAQFRHMCNSFFVDLVSTMCFKDNTPPEKSVIDTLLSLLFVQKELLRDASQKHREHTKSLSPFDDVVDQTPVIRSVLLKLLLKYSFHEVKDYIQNYLTQLEKKAFLTEDKTELYLLFISCLEDSVHQKTSAGCRNLEQVLREEGHFLRTYSPGLQGQEPVRIASVEYLQEVARVRLCLDLAADFLSELQEGSELAEDKRRFLKHVEEFCTRVNNDWHRVYLVRKLSSQRGMEFVQSFSKQGHPCQWVFPRKVIAQQKDHVSLMDRYLVHGNEYKAVRDATAKAVLECKTLDIGNALMACRSPKPQQTAYLLLALYTEVAALYRSPNGSLHPEAKQLEAVNKFIKESKILSDPNIRCFARSLVDNTLPLLKIRSANSILKGTVTEMAVHVATILLCGHNQILKPLRNLAFYPVNMANAFLPTMPEDLLVHARTWRGLENVTWYTCPRGHPCSVGECGRPMQESTCLDCGLPVGGLNHTPHEGFSAIRNNEDRTQTGHVLGSPQSSGVAEVSDRGQSPVVFILTRLLTHLAMLVGATHNPQALTVIIKPWVQDPQGFLQQHIQRDLEQLTKMLGRSADETIHVVHLILSSLLRVQSHGVLNFNAELSTKGCRNNWEKHFETLLLRELKHLDKNLPAINALISQDERISSNPVTKIIYGDPATFLPHLPQKSIIHCSKIWSCRRKITVEYLQHIVEQKNGKETVPVLWHFLQKEAELRLVKFLPEILALQRDLVKQFQNVSRVEYSSIRGFIHSHSSDGLRKLLHDRITIFLSTWNALRRSLETNGEIKLPKDYCCSDLDLDAEFEVILPRRQGLGLCGTALVSYLISLHNNMVYTVQKFSNEDNSYSVDISEVADLHVISYEVERDLNPLILSNCQYQVQQGGETSQEFDLEKIQRQISSRFLQGKPRLTLKGIPTLVYRRDWNYEHLFMDIKNKMAQSSLPNLAISTISGQLQSYSDACEALSIIEITLGFLSTAGGDPGMDLNVYIEEVLRMCDQTAQVLKAFSRCQLRHIIALWQFLSAHKSEQRLRLNKELFREIDVQYKEELSTQHQRLLGTFLNEAGLDAFLLELHEMIVLKLKGPRAANSFNPNWSLKDTLVSYMETKDSDILSEVESQFPEEILMSSCISVWKIAATRKWDRQSR</sequence>
<dbReference type="EC" id="2.3.2.27" evidence="1"/>
<dbReference type="EC" id="3.6.4.-" evidence="11"/>
<dbReference type="EC" id="2.3.2.-" evidence="1"/>
<dbReference type="EMBL" id="AL645911">
    <property type="status" value="NOT_ANNOTATED_CDS"/>
    <property type="molecule type" value="Genomic_DNA"/>
</dbReference>
<dbReference type="EMBL" id="AK077880">
    <property type="protein sequence ID" value="BAC37048.1"/>
    <property type="status" value="ALT_INIT"/>
    <property type="molecule type" value="mRNA"/>
</dbReference>
<dbReference type="RefSeq" id="NP_001035094.2">
    <property type="nucleotide sequence ID" value="NM_001040005.3"/>
</dbReference>
<dbReference type="PDB" id="6TAX">
    <property type="method" value="EM"/>
    <property type="resolution" value="3.20 A"/>
    <property type="chains" value="A=591-5148"/>
</dbReference>
<dbReference type="PDB" id="6TAY">
    <property type="method" value="EM"/>
    <property type="resolution" value="3.20 A"/>
    <property type="chains" value="A=591-5148"/>
</dbReference>
<dbReference type="PDB" id="7OIK">
    <property type="method" value="EM"/>
    <property type="resolution" value="3.50 A"/>
    <property type="chains" value="A=1-5148"/>
</dbReference>
<dbReference type="PDB" id="7OIM">
    <property type="method" value="EM"/>
    <property type="resolution" value="4.00 A"/>
    <property type="chains" value="A=339-5148"/>
</dbReference>
<dbReference type="PDBsum" id="6TAX"/>
<dbReference type="PDBsum" id="6TAY"/>
<dbReference type="PDBsum" id="7OIK"/>
<dbReference type="PDBsum" id="7OIM"/>
<dbReference type="EMDB" id="EMD-10429"/>
<dbReference type="EMDB" id="EMD-10430"/>
<dbReference type="EMDB" id="EMD-12931"/>
<dbReference type="EMDB" id="EMD-12932"/>
<dbReference type="SMR" id="E9Q555"/>
<dbReference type="FunCoup" id="E9Q555">
    <property type="interactions" value="1565"/>
</dbReference>
<dbReference type="IntAct" id="E9Q555">
    <property type="interactions" value="1"/>
</dbReference>
<dbReference type="MINT" id="E9Q555"/>
<dbReference type="STRING" id="10090.ENSMUSP00000091429"/>
<dbReference type="GlyGen" id="E9Q555">
    <property type="glycosylation" value="4 sites, 1 O-linked glycan (3 sites)"/>
</dbReference>
<dbReference type="iPTMnet" id="E9Q555"/>
<dbReference type="PhosphoSitePlus" id="E9Q555"/>
<dbReference type="SwissPalm" id="E9Q555"/>
<dbReference type="jPOST" id="E9Q555"/>
<dbReference type="PaxDb" id="10090-ENSMUSP00000091429"/>
<dbReference type="PeptideAtlas" id="E9Q555"/>
<dbReference type="ProteomicsDB" id="300423"/>
<dbReference type="Pumba" id="E9Q555"/>
<dbReference type="Antibodypedia" id="46314">
    <property type="antibodies" value="195 antibodies from 28 providers"/>
</dbReference>
<dbReference type="GeneID" id="672511"/>
<dbReference type="AGR" id="MGI:1289196"/>
<dbReference type="MGI" id="MGI:1289196">
    <property type="gene designation" value="Rnf213"/>
</dbReference>
<dbReference type="VEuPathDB" id="HostDB:ENSMUSG00000070327"/>
<dbReference type="eggNOG" id="ENOG502QQ65">
    <property type="taxonomic scope" value="Eukaryota"/>
</dbReference>
<dbReference type="HOGENOM" id="CLU_000066_0_0_1"/>
<dbReference type="InParanoid" id="E9Q555"/>
<dbReference type="PhylomeDB" id="E9Q555"/>
<dbReference type="TreeFam" id="TF329577"/>
<dbReference type="Reactome" id="R-MMU-983168">
    <property type="pathway name" value="Antigen processing: Ubiquitination &amp; Proteasome degradation"/>
</dbReference>
<dbReference type="UniPathway" id="UPA00143"/>
<dbReference type="ChiTaRS" id="Rnf213">
    <property type="organism name" value="mouse"/>
</dbReference>
<dbReference type="PRO" id="PR:E9Q555"/>
<dbReference type="Proteomes" id="UP000000589">
    <property type="component" value="Chromosome 11"/>
</dbReference>
<dbReference type="RNAct" id="E9Q555">
    <property type="molecule type" value="protein"/>
</dbReference>
<dbReference type="Bgee" id="ENSMUSG00000070327">
    <property type="expression patterns" value="Expressed in small intestine Peyer's patch and 218 other cell types or tissues"/>
</dbReference>
<dbReference type="ExpressionAtlas" id="E9Q555">
    <property type="expression patterns" value="baseline and differential"/>
</dbReference>
<dbReference type="GO" id="GO:0005737">
    <property type="term" value="C:cytoplasm"/>
    <property type="evidence" value="ECO:0000250"/>
    <property type="project" value="UniProtKB"/>
</dbReference>
<dbReference type="GO" id="GO:0005829">
    <property type="term" value="C:cytosol"/>
    <property type="evidence" value="ECO:0000250"/>
    <property type="project" value="UniProtKB"/>
</dbReference>
<dbReference type="GO" id="GO:0005811">
    <property type="term" value="C:lipid droplet"/>
    <property type="evidence" value="ECO:0000250"/>
    <property type="project" value="UniProtKB"/>
</dbReference>
<dbReference type="GO" id="GO:0005524">
    <property type="term" value="F:ATP binding"/>
    <property type="evidence" value="ECO:0007669"/>
    <property type="project" value="UniProtKB-KW"/>
</dbReference>
<dbReference type="GO" id="GO:0016887">
    <property type="term" value="F:ATP hydrolysis activity"/>
    <property type="evidence" value="ECO:0000250"/>
    <property type="project" value="UniProtKB"/>
</dbReference>
<dbReference type="GO" id="GO:0061630">
    <property type="term" value="F:ubiquitin protein ligase activity"/>
    <property type="evidence" value="ECO:0000250"/>
    <property type="project" value="UniProtKB"/>
</dbReference>
<dbReference type="GO" id="GO:0004842">
    <property type="term" value="F:ubiquitin-protein transferase activity"/>
    <property type="evidence" value="ECO:0000250"/>
    <property type="project" value="UniProtKB"/>
</dbReference>
<dbReference type="GO" id="GO:0008270">
    <property type="term" value="F:zinc ion binding"/>
    <property type="evidence" value="ECO:0007669"/>
    <property type="project" value="UniProtKB-KW"/>
</dbReference>
<dbReference type="GO" id="GO:0001525">
    <property type="term" value="P:angiogenesis"/>
    <property type="evidence" value="ECO:0000315"/>
    <property type="project" value="UniProtKB"/>
</dbReference>
<dbReference type="GO" id="GO:0042742">
    <property type="term" value="P:defense response to bacterium"/>
    <property type="evidence" value="ECO:0000315"/>
    <property type="project" value="UniProtKB"/>
</dbReference>
<dbReference type="GO" id="GO:0002376">
    <property type="term" value="P:immune system process"/>
    <property type="evidence" value="ECO:0007669"/>
    <property type="project" value="UniProtKB-KW"/>
</dbReference>
<dbReference type="GO" id="GO:0140042">
    <property type="term" value="P:lipid droplet formation"/>
    <property type="evidence" value="ECO:0000250"/>
    <property type="project" value="UniProtKB"/>
</dbReference>
<dbReference type="GO" id="GO:0120323">
    <property type="term" value="P:lipid ubiquitination"/>
    <property type="evidence" value="ECO:0000315"/>
    <property type="project" value="UniProtKB"/>
</dbReference>
<dbReference type="GO" id="GO:2000051">
    <property type="term" value="P:negative regulation of non-canonical Wnt signaling pathway"/>
    <property type="evidence" value="ECO:0000250"/>
    <property type="project" value="UniProtKB"/>
</dbReference>
<dbReference type="GO" id="GO:0051865">
    <property type="term" value="P:protein autoubiquitination"/>
    <property type="evidence" value="ECO:0000250"/>
    <property type="project" value="UniProtKB"/>
</dbReference>
<dbReference type="GO" id="GO:0070534">
    <property type="term" value="P:protein K63-linked ubiquitination"/>
    <property type="evidence" value="ECO:0000250"/>
    <property type="project" value="UniProtKB"/>
</dbReference>
<dbReference type="GO" id="GO:0016567">
    <property type="term" value="P:protein ubiquitination"/>
    <property type="evidence" value="ECO:0000250"/>
    <property type="project" value="UniProtKB"/>
</dbReference>
<dbReference type="GO" id="GO:0019216">
    <property type="term" value="P:regulation of lipid metabolic process"/>
    <property type="evidence" value="ECO:0000250"/>
    <property type="project" value="UniProtKB"/>
</dbReference>
<dbReference type="GO" id="GO:0002040">
    <property type="term" value="P:sprouting angiogenesis"/>
    <property type="evidence" value="ECO:0000250"/>
    <property type="project" value="UniProtKB"/>
</dbReference>
<dbReference type="GO" id="GO:0006511">
    <property type="term" value="P:ubiquitin-dependent protein catabolic process"/>
    <property type="evidence" value="ECO:0000250"/>
    <property type="project" value="UniProtKB"/>
</dbReference>
<dbReference type="GO" id="GO:0098792">
    <property type="term" value="P:xenophagy"/>
    <property type="evidence" value="ECO:0000250"/>
    <property type="project" value="UniProtKB"/>
</dbReference>
<dbReference type="CDD" id="cd16561">
    <property type="entry name" value="RING-HC_RNF213"/>
    <property type="match status" value="1"/>
</dbReference>
<dbReference type="FunFam" id="3.30.40.10:FF:000488">
    <property type="entry name" value="E3 ubiquitin-protein ligase RNF213"/>
    <property type="match status" value="1"/>
</dbReference>
<dbReference type="FunFam" id="3.40.50.300:FF:000491">
    <property type="entry name" value="E3 ubiquitin-protein ligase RNF213"/>
    <property type="match status" value="1"/>
</dbReference>
<dbReference type="FunFam" id="3.40.50.300:FF:000804">
    <property type="entry name" value="E3 ubiquitin-protein ligase RNF213"/>
    <property type="match status" value="1"/>
</dbReference>
<dbReference type="Gene3D" id="3.40.50.300">
    <property type="entry name" value="P-loop containing nucleotide triphosphate hydrolases"/>
    <property type="match status" value="2"/>
</dbReference>
<dbReference type="Gene3D" id="3.30.40.10">
    <property type="entry name" value="Zinc/RING finger domain, C3HC4 (zinc finger)"/>
    <property type="match status" value="1"/>
</dbReference>
<dbReference type="InterPro" id="IPR003593">
    <property type="entry name" value="AAA+_ATPase"/>
</dbReference>
<dbReference type="InterPro" id="IPR027417">
    <property type="entry name" value="P-loop_NTPase"/>
</dbReference>
<dbReference type="InterPro" id="IPR031248">
    <property type="entry name" value="RNF213"/>
</dbReference>
<dbReference type="InterPro" id="IPR046439">
    <property type="entry name" value="ZF_RZ_dom"/>
</dbReference>
<dbReference type="InterPro" id="IPR018957">
    <property type="entry name" value="Znf_C3HC4_RING-type"/>
</dbReference>
<dbReference type="InterPro" id="IPR001841">
    <property type="entry name" value="Znf_RING"/>
</dbReference>
<dbReference type="InterPro" id="IPR013083">
    <property type="entry name" value="Znf_RING/FYVE/PHD"/>
</dbReference>
<dbReference type="InterPro" id="IPR017907">
    <property type="entry name" value="Znf_RING_CS"/>
</dbReference>
<dbReference type="PANTHER" id="PTHR22605:SF16">
    <property type="entry name" value="E3 UBIQUITIN-PROTEIN LIGASE RNF213"/>
    <property type="match status" value="1"/>
</dbReference>
<dbReference type="PANTHER" id="PTHR22605">
    <property type="entry name" value="RZ-TYPE DOMAIN-CONTAINING PROTEIN"/>
    <property type="match status" value="1"/>
</dbReference>
<dbReference type="Pfam" id="PF00097">
    <property type="entry name" value="zf-C3HC4"/>
    <property type="match status" value="1"/>
</dbReference>
<dbReference type="Pfam" id="PF20173">
    <property type="entry name" value="ZnF_RZ-type"/>
    <property type="match status" value="1"/>
</dbReference>
<dbReference type="SMART" id="SM00382">
    <property type="entry name" value="AAA"/>
    <property type="match status" value="2"/>
</dbReference>
<dbReference type="SMART" id="SM00184">
    <property type="entry name" value="RING"/>
    <property type="match status" value="1"/>
</dbReference>
<dbReference type="SUPFAM" id="SSF52540">
    <property type="entry name" value="P-loop containing nucleoside triphosphate hydrolases"/>
    <property type="match status" value="2"/>
</dbReference>
<dbReference type="SUPFAM" id="SSF57850">
    <property type="entry name" value="RING/U-box"/>
    <property type="match status" value="1"/>
</dbReference>
<dbReference type="PROSITE" id="PS00518">
    <property type="entry name" value="ZF_RING_1"/>
    <property type="match status" value="1"/>
</dbReference>
<dbReference type="PROSITE" id="PS50089">
    <property type="entry name" value="ZF_RING_2"/>
    <property type="match status" value="1"/>
</dbReference>
<dbReference type="PROSITE" id="PS51981">
    <property type="entry name" value="ZF_RZ"/>
    <property type="match status" value="1"/>
</dbReference>
<keyword id="KW-0002">3D-structure</keyword>
<keyword id="KW-0037">Angiogenesis</keyword>
<keyword id="KW-0067">ATP-binding</keyword>
<keyword id="KW-0175">Coiled coil</keyword>
<keyword id="KW-0963">Cytoplasm</keyword>
<keyword id="KW-0378">Hydrolase</keyword>
<keyword id="KW-0391">Immunity</keyword>
<keyword id="KW-1017">Isopeptide bond</keyword>
<keyword id="KW-0551">Lipid droplet</keyword>
<keyword id="KW-0443">Lipid metabolism</keyword>
<keyword id="KW-0479">Metal-binding</keyword>
<keyword id="KW-0511">Multifunctional enzyme</keyword>
<keyword id="KW-0547">Nucleotide-binding</keyword>
<keyword id="KW-0597">Phosphoprotein</keyword>
<keyword id="KW-1185">Reference proteome</keyword>
<keyword id="KW-0808">Transferase</keyword>
<keyword id="KW-0832">Ubl conjugation</keyword>
<keyword id="KW-0833">Ubl conjugation pathway</keyword>
<keyword id="KW-0862">Zinc</keyword>
<keyword id="KW-0863">Zinc-finger</keyword>
<proteinExistence type="evidence at protein level"/>
<gene>
    <name evidence="16" type="primary">Rnf213</name>
    <name evidence="14" type="synonym">Mystr</name>
</gene>
<reference key="1">
    <citation type="journal article" date="2009" name="PLoS Biol.">
        <title>Lineage-specific biology revealed by a finished genome assembly of the mouse.</title>
        <authorList>
            <person name="Church D.M."/>
            <person name="Goodstadt L."/>
            <person name="Hillier L.W."/>
            <person name="Zody M.C."/>
            <person name="Goldstein S."/>
            <person name="She X."/>
            <person name="Bult C.J."/>
            <person name="Agarwala R."/>
            <person name="Cherry J.L."/>
            <person name="DiCuccio M."/>
            <person name="Hlavina W."/>
            <person name="Kapustin Y."/>
            <person name="Meric P."/>
            <person name="Maglott D."/>
            <person name="Birtle Z."/>
            <person name="Marques A.C."/>
            <person name="Graves T."/>
            <person name="Zhou S."/>
            <person name="Teague B."/>
            <person name="Potamousis K."/>
            <person name="Churas C."/>
            <person name="Place M."/>
            <person name="Herschleb J."/>
            <person name="Runnheim R."/>
            <person name="Forrest D."/>
            <person name="Amos-Landgraf J."/>
            <person name="Schwartz D.C."/>
            <person name="Cheng Z."/>
            <person name="Lindblad-Toh K."/>
            <person name="Eichler E.E."/>
            <person name="Ponting C.P."/>
        </authorList>
    </citation>
    <scope>NUCLEOTIDE SEQUENCE [LARGE SCALE GENOMIC DNA]</scope>
    <source>
        <strain>C57BL/6J</strain>
    </source>
</reference>
<reference key="2">
    <citation type="journal article" date="2005" name="Science">
        <title>The transcriptional landscape of the mammalian genome.</title>
        <authorList>
            <person name="Carninci P."/>
            <person name="Kasukawa T."/>
            <person name="Katayama S."/>
            <person name="Gough J."/>
            <person name="Frith M.C."/>
            <person name="Maeda N."/>
            <person name="Oyama R."/>
            <person name="Ravasi T."/>
            <person name="Lenhard B."/>
            <person name="Wells C."/>
            <person name="Kodzius R."/>
            <person name="Shimokawa K."/>
            <person name="Bajic V.B."/>
            <person name="Brenner S.E."/>
            <person name="Batalov S."/>
            <person name="Forrest A.R."/>
            <person name="Zavolan M."/>
            <person name="Davis M.J."/>
            <person name="Wilming L.G."/>
            <person name="Aidinis V."/>
            <person name="Allen J.E."/>
            <person name="Ambesi-Impiombato A."/>
            <person name="Apweiler R."/>
            <person name="Aturaliya R.N."/>
            <person name="Bailey T.L."/>
            <person name="Bansal M."/>
            <person name="Baxter L."/>
            <person name="Beisel K.W."/>
            <person name="Bersano T."/>
            <person name="Bono H."/>
            <person name="Chalk A.M."/>
            <person name="Chiu K.P."/>
            <person name="Choudhary V."/>
            <person name="Christoffels A."/>
            <person name="Clutterbuck D.R."/>
            <person name="Crowe M.L."/>
            <person name="Dalla E."/>
            <person name="Dalrymple B.P."/>
            <person name="de Bono B."/>
            <person name="Della Gatta G."/>
            <person name="di Bernardo D."/>
            <person name="Down T."/>
            <person name="Engstrom P."/>
            <person name="Fagiolini M."/>
            <person name="Faulkner G."/>
            <person name="Fletcher C.F."/>
            <person name="Fukushima T."/>
            <person name="Furuno M."/>
            <person name="Futaki S."/>
            <person name="Gariboldi M."/>
            <person name="Georgii-Hemming P."/>
            <person name="Gingeras T.R."/>
            <person name="Gojobori T."/>
            <person name="Green R.E."/>
            <person name="Gustincich S."/>
            <person name="Harbers M."/>
            <person name="Hayashi Y."/>
            <person name="Hensch T.K."/>
            <person name="Hirokawa N."/>
            <person name="Hill D."/>
            <person name="Huminiecki L."/>
            <person name="Iacono M."/>
            <person name="Ikeo K."/>
            <person name="Iwama A."/>
            <person name="Ishikawa T."/>
            <person name="Jakt M."/>
            <person name="Kanapin A."/>
            <person name="Katoh M."/>
            <person name="Kawasawa Y."/>
            <person name="Kelso J."/>
            <person name="Kitamura H."/>
            <person name="Kitano H."/>
            <person name="Kollias G."/>
            <person name="Krishnan S.P."/>
            <person name="Kruger A."/>
            <person name="Kummerfeld S.K."/>
            <person name="Kurochkin I.V."/>
            <person name="Lareau L.F."/>
            <person name="Lazarevic D."/>
            <person name="Lipovich L."/>
            <person name="Liu J."/>
            <person name="Liuni S."/>
            <person name="McWilliam S."/>
            <person name="Madan Babu M."/>
            <person name="Madera M."/>
            <person name="Marchionni L."/>
            <person name="Matsuda H."/>
            <person name="Matsuzawa S."/>
            <person name="Miki H."/>
            <person name="Mignone F."/>
            <person name="Miyake S."/>
            <person name="Morris K."/>
            <person name="Mottagui-Tabar S."/>
            <person name="Mulder N."/>
            <person name="Nakano N."/>
            <person name="Nakauchi H."/>
            <person name="Ng P."/>
            <person name="Nilsson R."/>
            <person name="Nishiguchi S."/>
            <person name="Nishikawa S."/>
            <person name="Nori F."/>
            <person name="Ohara O."/>
            <person name="Okazaki Y."/>
            <person name="Orlando V."/>
            <person name="Pang K.C."/>
            <person name="Pavan W.J."/>
            <person name="Pavesi G."/>
            <person name="Pesole G."/>
            <person name="Petrovsky N."/>
            <person name="Piazza S."/>
            <person name="Reed J."/>
            <person name="Reid J.F."/>
            <person name="Ring B.Z."/>
            <person name="Ringwald M."/>
            <person name="Rost B."/>
            <person name="Ruan Y."/>
            <person name="Salzberg S.L."/>
            <person name="Sandelin A."/>
            <person name="Schneider C."/>
            <person name="Schoenbach C."/>
            <person name="Sekiguchi K."/>
            <person name="Semple C.A."/>
            <person name="Seno S."/>
            <person name="Sessa L."/>
            <person name="Sheng Y."/>
            <person name="Shibata Y."/>
            <person name="Shimada H."/>
            <person name="Shimada K."/>
            <person name="Silva D."/>
            <person name="Sinclair B."/>
            <person name="Sperling S."/>
            <person name="Stupka E."/>
            <person name="Sugiura K."/>
            <person name="Sultana R."/>
            <person name="Takenaka Y."/>
            <person name="Taki K."/>
            <person name="Tammoja K."/>
            <person name="Tan S.L."/>
            <person name="Tang S."/>
            <person name="Taylor M.S."/>
            <person name="Tegner J."/>
            <person name="Teichmann S.A."/>
            <person name="Ueda H.R."/>
            <person name="van Nimwegen E."/>
            <person name="Verardo R."/>
            <person name="Wei C.L."/>
            <person name="Yagi K."/>
            <person name="Yamanishi H."/>
            <person name="Zabarovsky E."/>
            <person name="Zhu S."/>
            <person name="Zimmer A."/>
            <person name="Hide W."/>
            <person name="Bult C."/>
            <person name="Grimmond S.M."/>
            <person name="Teasdale R.D."/>
            <person name="Liu E.T."/>
            <person name="Brusic V."/>
            <person name="Quackenbush J."/>
            <person name="Wahlestedt C."/>
            <person name="Mattick J.S."/>
            <person name="Hume D.A."/>
            <person name="Kai C."/>
            <person name="Sasaki D."/>
            <person name="Tomaru Y."/>
            <person name="Fukuda S."/>
            <person name="Kanamori-Katayama M."/>
            <person name="Suzuki M."/>
            <person name="Aoki J."/>
            <person name="Arakawa T."/>
            <person name="Iida J."/>
            <person name="Imamura K."/>
            <person name="Itoh M."/>
            <person name="Kato T."/>
            <person name="Kawaji H."/>
            <person name="Kawagashira N."/>
            <person name="Kawashima T."/>
            <person name="Kojima M."/>
            <person name="Kondo S."/>
            <person name="Konno H."/>
            <person name="Nakano K."/>
            <person name="Ninomiya N."/>
            <person name="Nishio T."/>
            <person name="Okada M."/>
            <person name="Plessy C."/>
            <person name="Shibata K."/>
            <person name="Shiraki T."/>
            <person name="Suzuki S."/>
            <person name="Tagami M."/>
            <person name="Waki K."/>
            <person name="Watahiki A."/>
            <person name="Okamura-Oho Y."/>
            <person name="Suzuki H."/>
            <person name="Kawai J."/>
            <person name="Hayashizaki Y."/>
        </authorList>
    </citation>
    <scope>NUCLEOTIDE SEQUENCE [LARGE SCALE MRNA] OF 4807-5148</scope>
    <source>
        <strain>C57BL/6J</strain>
        <tissue>Testis</tissue>
    </source>
</reference>
<reference key="3">
    <citation type="journal article" date="2010" name="Cell">
        <title>A tissue-specific atlas of mouse protein phosphorylation and expression.</title>
        <authorList>
            <person name="Huttlin E.L."/>
            <person name="Jedrychowski M.P."/>
            <person name="Elias J.E."/>
            <person name="Goswami T."/>
            <person name="Rad R."/>
            <person name="Beausoleil S.A."/>
            <person name="Villen J."/>
            <person name="Haas W."/>
            <person name="Sowa M.E."/>
            <person name="Gygi S.P."/>
        </authorList>
    </citation>
    <scope>IDENTIFICATION BY MASS SPECTROMETRY [LARGE SCALE ANALYSIS]</scope>
    <source>
        <tissue>Brain</tissue>
        <tissue>Brown adipose tissue</tissue>
        <tissue>Heart</tissue>
        <tissue>Kidney</tissue>
        <tissue>Liver</tissue>
        <tissue>Lung</tissue>
        <tissue>Pancreas</tissue>
        <tissue>Spleen</tissue>
        <tissue>Testis</tissue>
    </source>
</reference>
<reference key="4">
    <citation type="journal article" date="2013" name="Biochem. Biophys. Res. Commun.">
        <title>Ablation of Rnf213 retards progression of diabetes in the Akita mouse.</title>
        <authorList>
            <person name="Kobayashi H."/>
            <person name="Yamazaki S."/>
            <person name="Takashima S."/>
            <person name="Liu W."/>
            <person name="Okuda H."/>
            <person name="Yan J."/>
            <person name="Fujii Y."/>
            <person name="Hitomi T."/>
            <person name="Harada K.H."/>
            <person name="Habu T."/>
            <person name="Koizumi A."/>
        </authorList>
    </citation>
    <scope>DISRUPTION PHENOTYPE</scope>
</reference>
<reference key="5">
    <citation type="journal article" date="2014" name="Brain Res.">
        <title>Temporal profile of the vascular anatomy evaluated by 9.4-T magnetic resonance angiography and histopathological analysis in mice lacking RNF213: a susceptibility gene for moyamoya disease.</title>
        <authorList>
            <person name="Sonobe S."/>
            <person name="Fujimura M."/>
            <person name="Niizuma K."/>
            <person name="Nishijima Y."/>
            <person name="Ito A."/>
            <person name="Shimizu H."/>
            <person name="Kikuchi A."/>
            <person name="Arai-Ichinoi N."/>
            <person name="Kure S."/>
            <person name="Tominaga T."/>
        </authorList>
    </citation>
    <scope>DISRUPTION PHENOTYPE</scope>
</reference>
<reference key="6">
    <citation type="journal article" date="2014" name="NeuroReport">
        <title>Increased vascular MMP-9 in mice lacking RNF213: moyamoya disease susceptibility gene.</title>
        <authorList>
            <person name="Sonobe S."/>
            <person name="Fujimura M."/>
            <person name="Niizuma K."/>
            <person name="Fujimura T."/>
            <person name="Furudate S."/>
            <person name="Nishijima Y."/>
            <person name="Kure S."/>
            <person name="Tominaga T."/>
        </authorList>
    </citation>
    <scope>DISRUPTION PHENOTYPE</scope>
</reference>
<reference key="7">
    <citation type="journal article" date="2015" name="Brain Res.">
        <title>Temporal profile of the vascular anatomy evaluated by 9.4-tesla magnetic resonance angiography and histological analysis in mice with the R4859K mutation of RNF213, the susceptibility gene for moyamoya disease.</title>
        <authorList>
            <person name="Kanoke A."/>
            <person name="Fujimura M."/>
            <person name="Niizuma K."/>
            <person name="Ito A."/>
            <person name="Sakata H."/>
            <person name="Sato-Maeda M."/>
            <person name="Morita-Fujimura Y."/>
            <person name="Kure S."/>
            <person name="Tominaga T."/>
        </authorList>
    </citation>
    <scope>MUTAGENESIS OF ARG-4753</scope>
</reference>
<reference key="8">
    <citation type="journal article" date="2015" name="J. Am. Heart Assoc.">
        <title>Biochemical and functional characterization of RNF213 (Mysterin) R4810K, a susceptibility mutation of Moyamoya disease, in angiogenesis in vitro and in vivo.</title>
        <authorList>
            <person name="Kobayashi H."/>
            <person name="Matsuda Y."/>
            <person name="Hitomi T."/>
            <person name="Okuda H."/>
            <person name="Shioi H."/>
            <person name="Matsuda T."/>
            <person name="Imai H."/>
            <person name="Sone M."/>
            <person name="Taura D."/>
            <person name="Harada K.H."/>
            <person name="Habu T."/>
            <person name="Takagi Y."/>
            <person name="Miyamoto S."/>
            <person name="Koizumi A."/>
        </authorList>
    </citation>
    <scope>MUTAGENESIS OF ARG-4753</scope>
</reference>
<reference key="9">
    <citation type="journal article" date="2021" name="Mamm. Genome">
        <title>The ring finger protein 213 gene (Rnf213) contributes to Rift Valley fever resistance in mice.</title>
        <authorList>
            <person name="Houzelstein D."/>
            <person name="Simon-Chazottes D."/>
            <person name="Batista L."/>
            <person name="Tokuda S."/>
            <person name="Langa Vives F."/>
            <person name="Flamand M."/>
            <person name="Montagutelli X."/>
            <person name="Panthier J.J."/>
        </authorList>
    </citation>
    <scope>DISRUPTION PHENOTYPE</scope>
</reference>
<reference key="10">
    <citation type="journal article" date="2021" name="Nature">
        <title>Ubiquitylation of lipopolysaccharide by RNF213 during bacterial infection.</title>
        <authorList>
            <person name="Otten E.G."/>
            <person name="Werner E."/>
            <person name="Crespillo-Casado A."/>
            <person name="Boyle K.B."/>
            <person name="Dharamdasani V."/>
            <person name="Pathe C."/>
            <person name="Santhanam B."/>
            <person name="Randow F."/>
        </authorList>
    </citation>
    <scope>FUNCTION</scope>
</reference>
<reference evidence="17 18" key="11">
    <citation type="journal article" date="2020" name="Elife">
        <title>Moyamoya disease factor RNF213 is a giant E3 ligase with a dynein-like core and a distinct ubiquitin-transfer mechanism.</title>
        <authorList>
            <person name="Ahel J."/>
            <person name="Lehner A."/>
            <person name="Vogel A."/>
            <person name="Schleiffer A."/>
            <person name="Meinhart A."/>
            <person name="Haselbach D."/>
            <person name="Clausen T."/>
        </authorList>
    </citation>
    <scope>STRUCTURE BY ELECTRON MICROSCOPY (3.20 ANGSTROMS) OF 591-5152 IN COMPLEX WITH ZINC AND ATP</scope>
    <scope>FUNCTION</scope>
    <scope>CATALYTIC ACTIVITY</scope>
    <scope>SUBUNIT</scope>
    <scope>INTERACTION WITH UBE2L3</scope>
    <scope>DOMAIN</scope>
    <scope>MUTAGENESIS OF ARG-4753</scope>
</reference>